<reference key="1">
    <citation type="journal article" date="1991" name="Biochem. Biophys. Res. Commun.">
        <title>Cloning of the human serotonin 5-HT2 and 5-HT1C receptor subtypes.</title>
        <authorList>
            <person name="Saltzman A.G."/>
            <person name="Morse B."/>
            <person name="Whitman M.M."/>
            <person name="Ivanshchenko Y."/>
            <person name="Jaye M."/>
            <person name="Felder S."/>
        </authorList>
    </citation>
    <scope>NUCLEOTIDE SEQUENCE [MRNA] (ISOFORM 1)</scope>
    <source>
        <tissue>Brain stem</tissue>
    </source>
</reference>
<reference key="2">
    <citation type="journal article" date="1992" name="Brain Res. Mol. Brain Res.">
        <title>The human 5-HT2 receptor is encoded by a multiple intron-exon gene.</title>
        <authorList>
            <person name="Chen K."/>
            <person name="Yang W."/>
            <person name="Grimsby J."/>
            <person name="Shih J.C."/>
        </authorList>
    </citation>
    <scope>NUCLEOTIDE SEQUENCE [GENOMIC DNA]</scope>
</reference>
<reference key="3">
    <citation type="journal article" date="1994" name="J. Neurochem.">
        <title>Primary structure of the human platelet serotonin 5-HT2A receptor: identify with frontal cortex serotonin 5-HT2A receptor.</title>
        <authorList>
            <person name="Cook E.H. Jr."/>
            <person name="Fletcher K.E."/>
            <person name="Wainwright M."/>
            <person name="Marks N."/>
            <person name="Yan S.Y."/>
            <person name="Leventhal B.L."/>
        </authorList>
    </citation>
    <scope>NUCLEOTIDE SEQUENCE [MRNA] (ISOFORM 1)</scope>
    <source>
        <tissue>Platelet</tissue>
    </source>
</reference>
<reference key="4">
    <citation type="submission" date="2002-04" db="EMBL/GenBank/DDBJ databases">
        <title>cDNA clones of human proteins involved in signal transduction sequenced by the Guthrie cDNA resource center (www.cdna.org).</title>
        <authorList>
            <person name="Puhl H.L. III"/>
            <person name="Ikeda S.R."/>
            <person name="Aronstam R.S."/>
        </authorList>
    </citation>
    <scope>NUCLEOTIDE SEQUENCE [LARGE SCALE MRNA] (ISOFORM 1)</scope>
    <source>
        <tissue>Brain</tissue>
    </source>
</reference>
<reference key="5">
    <citation type="journal article" date="2004" name="Nat. Genet.">
        <title>Complete sequencing and characterization of 21,243 full-length human cDNAs.</title>
        <authorList>
            <person name="Ota T."/>
            <person name="Suzuki Y."/>
            <person name="Nishikawa T."/>
            <person name="Otsuki T."/>
            <person name="Sugiyama T."/>
            <person name="Irie R."/>
            <person name="Wakamatsu A."/>
            <person name="Hayashi K."/>
            <person name="Sato H."/>
            <person name="Nagai K."/>
            <person name="Kimura K."/>
            <person name="Makita H."/>
            <person name="Sekine M."/>
            <person name="Obayashi M."/>
            <person name="Nishi T."/>
            <person name="Shibahara T."/>
            <person name="Tanaka T."/>
            <person name="Ishii S."/>
            <person name="Yamamoto J."/>
            <person name="Saito K."/>
            <person name="Kawai Y."/>
            <person name="Isono Y."/>
            <person name="Nakamura Y."/>
            <person name="Nagahari K."/>
            <person name="Murakami K."/>
            <person name="Yasuda T."/>
            <person name="Iwayanagi T."/>
            <person name="Wagatsuma M."/>
            <person name="Shiratori A."/>
            <person name="Sudo H."/>
            <person name="Hosoiri T."/>
            <person name="Kaku Y."/>
            <person name="Kodaira H."/>
            <person name="Kondo H."/>
            <person name="Sugawara M."/>
            <person name="Takahashi M."/>
            <person name="Kanda K."/>
            <person name="Yokoi T."/>
            <person name="Furuya T."/>
            <person name="Kikkawa E."/>
            <person name="Omura Y."/>
            <person name="Abe K."/>
            <person name="Kamihara K."/>
            <person name="Katsuta N."/>
            <person name="Sato K."/>
            <person name="Tanikawa M."/>
            <person name="Yamazaki M."/>
            <person name="Ninomiya K."/>
            <person name="Ishibashi T."/>
            <person name="Yamashita H."/>
            <person name="Murakawa K."/>
            <person name="Fujimori K."/>
            <person name="Tanai H."/>
            <person name="Kimata M."/>
            <person name="Watanabe M."/>
            <person name="Hiraoka S."/>
            <person name="Chiba Y."/>
            <person name="Ishida S."/>
            <person name="Ono Y."/>
            <person name="Takiguchi S."/>
            <person name="Watanabe S."/>
            <person name="Yosida M."/>
            <person name="Hotuta T."/>
            <person name="Kusano J."/>
            <person name="Kanehori K."/>
            <person name="Takahashi-Fujii A."/>
            <person name="Hara H."/>
            <person name="Tanase T.-O."/>
            <person name="Nomura Y."/>
            <person name="Togiya S."/>
            <person name="Komai F."/>
            <person name="Hara R."/>
            <person name="Takeuchi K."/>
            <person name="Arita M."/>
            <person name="Imose N."/>
            <person name="Musashino K."/>
            <person name="Yuuki H."/>
            <person name="Oshima A."/>
            <person name="Sasaki N."/>
            <person name="Aotsuka S."/>
            <person name="Yoshikawa Y."/>
            <person name="Matsunawa H."/>
            <person name="Ichihara T."/>
            <person name="Shiohata N."/>
            <person name="Sano S."/>
            <person name="Moriya S."/>
            <person name="Momiyama H."/>
            <person name="Satoh N."/>
            <person name="Takami S."/>
            <person name="Terashima Y."/>
            <person name="Suzuki O."/>
            <person name="Nakagawa S."/>
            <person name="Senoh A."/>
            <person name="Mizoguchi H."/>
            <person name="Goto Y."/>
            <person name="Shimizu F."/>
            <person name="Wakebe H."/>
            <person name="Hishigaki H."/>
            <person name="Watanabe T."/>
            <person name="Sugiyama A."/>
            <person name="Takemoto M."/>
            <person name="Kawakami B."/>
            <person name="Yamazaki M."/>
            <person name="Watanabe K."/>
            <person name="Kumagai A."/>
            <person name="Itakura S."/>
            <person name="Fukuzumi Y."/>
            <person name="Fujimori Y."/>
            <person name="Komiyama M."/>
            <person name="Tashiro H."/>
            <person name="Tanigami A."/>
            <person name="Fujiwara T."/>
            <person name="Ono T."/>
            <person name="Yamada K."/>
            <person name="Fujii Y."/>
            <person name="Ozaki K."/>
            <person name="Hirao M."/>
            <person name="Ohmori Y."/>
            <person name="Kawabata A."/>
            <person name="Hikiji T."/>
            <person name="Kobatake N."/>
            <person name="Inagaki H."/>
            <person name="Ikema Y."/>
            <person name="Okamoto S."/>
            <person name="Okitani R."/>
            <person name="Kawakami T."/>
            <person name="Noguchi S."/>
            <person name="Itoh T."/>
            <person name="Shigeta K."/>
            <person name="Senba T."/>
            <person name="Matsumura K."/>
            <person name="Nakajima Y."/>
            <person name="Mizuno T."/>
            <person name="Morinaga M."/>
            <person name="Sasaki M."/>
            <person name="Togashi T."/>
            <person name="Oyama M."/>
            <person name="Hata H."/>
            <person name="Watanabe M."/>
            <person name="Komatsu T."/>
            <person name="Mizushima-Sugano J."/>
            <person name="Satoh T."/>
            <person name="Shirai Y."/>
            <person name="Takahashi Y."/>
            <person name="Nakagawa K."/>
            <person name="Okumura K."/>
            <person name="Nagase T."/>
            <person name="Nomura N."/>
            <person name="Kikuchi H."/>
            <person name="Masuho Y."/>
            <person name="Yamashita R."/>
            <person name="Nakai K."/>
            <person name="Yada T."/>
            <person name="Nakamura Y."/>
            <person name="Ohara O."/>
            <person name="Isogai T."/>
            <person name="Sugano S."/>
        </authorList>
    </citation>
    <scope>NUCLEOTIDE SEQUENCE [LARGE SCALE MRNA] (ISOFORMS 1 AND 2)</scope>
    <source>
        <tissue>Testis</tissue>
        <tissue>Thalamus</tissue>
    </source>
</reference>
<reference key="6">
    <citation type="journal article" date="2004" name="Nature">
        <title>The DNA sequence and analysis of human chromosome 13.</title>
        <authorList>
            <person name="Dunham A."/>
            <person name="Matthews L.H."/>
            <person name="Burton J."/>
            <person name="Ashurst J.L."/>
            <person name="Howe K.L."/>
            <person name="Ashcroft K.J."/>
            <person name="Beare D.M."/>
            <person name="Burford D.C."/>
            <person name="Hunt S.E."/>
            <person name="Griffiths-Jones S."/>
            <person name="Jones M.C."/>
            <person name="Keenan S.J."/>
            <person name="Oliver K."/>
            <person name="Scott C.E."/>
            <person name="Ainscough R."/>
            <person name="Almeida J.P."/>
            <person name="Ambrose K.D."/>
            <person name="Andrews D.T."/>
            <person name="Ashwell R.I.S."/>
            <person name="Babbage A.K."/>
            <person name="Bagguley C.L."/>
            <person name="Bailey J."/>
            <person name="Bannerjee R."/>
            <person name="Barlow K.F."/>
            <person name="Bates K."/>
            <person name="Beasley H."/>
            <person name="Bird C.P."/>
            <person name="Bray-Allen S."/>
            <person name="Brown A.J."/>
            <person name="Brown J.Y."/>
            <person name="Burrill W."/>
            <person name="Carder C."/>
            <person name="Carter N.P."/>
            <person name="Chapman J.C."/>
            <person name="Clamp M.E."/>
            <person name="Clark S.Y."/>
            <person name="Clarke G."/>
            <person name="Clee C.M."/>
            <person name="Clegg S.C."/>
            <person name="Cobley V."/>
            <person name="Collins J.E."/>
            <person name="Corby N."/>
            <person name="Coville G.J."/>
            <person name="Deloukas P."/>
            <person name="Dhami P."/>
            <person name="Dunham I."/>
            <person name="Dunn M."/>
            <person name="Earthrowl M.E."/>
            <person name="Ellington A.G."/>
            <person name="Faulkner L."/>
            <person name="Frankish A.G."/>
            <person name="Frankland J."/>
            <person name="French L."/>
            <person name="Garner P."/>
            <person name="Garnett J."/>
            <person name="Gilbert J.G.R."/>
            <person name="Gilson C.J."/>
            <person name="Ghori J."/>
            <person name="Grafham D.V."/>
            <person name="Gribble S.M."/>
            <person name="Griffiths C."/>
            <person name="Hall R.E."/>
            <person name="Hammond S."/>
            <person name="Harley J.L."/>
            <person name="Hart E.A."/>
            <person name="Heath P.D."/>
            <person name="Howden P.J."/>
            <person name="Huckle E.J."/>
            <person name="Hunt P.J."/>
            <person name="Hunt A.R."/>
            <person name="Johnson C."/>
            <person name="Johnson D."/>
            <person name="Kay M."/>
            <person name="Kimberley A.M."/>
            <person name="King A."/>
            <person name="Laird G.K."/>
            <person name="Langford C.J."/>
            <person name="Lawlor S."/>
            <person name="Leongamornlert D.A."/>
            <person name="Lloyd D.M."/>
            <person name="Lloyd C."/>
            <person name="Loveland J.E."/>
            <person name="Lovell J."/>
            <person name="Martin S."/>
            <person name="Mashreghi-Mohammadi M."/>
            <person name="McLaren S.J."/>
            <person name="McMurray A."/>
            <person name="Milne S."/>
            <person name="Moore M.J.F."/>
            <person name="Nickerson T."/>
            <person name="Palmer S.A."/>
            <person name="Pearce A.V."/>
            <person name="Peck A.I."/>
            <person name="Pelan S."/>
            <person name="Phillimore B."/>
            <person name="Porter K.M."/>
            <person name="Rice C.M."/>
            <person name="Searle S."/>
            <person name="Sehra H.K."/>
            <person name="Shownkeen R."/>
            <person name="Skuce C.D."/>
            <person name="Smith M."/>
            <person name="Steward C.A."/>
            <person name="Sycamore N."/>
            <person name="Tester J."/>
            <person name="Thomas D.W."/>
            <person name="Tracey A."/>
            <person name="Tromans A."/>
            <person name="Tubby B."/>
            <person name="Wall M."/>
            <person name="Wallis J.M."/>
            <person name="West A.P."/>
            <person name="Whitehead S.L."/>
            <person name="Willey D.L."/>
            <person name="Wilming L."/>
            <person name="Wray P.W."/>
            <person name="Wright M.W."/>
            <person name="Young L."/>
            <person name="Coulson A."/>
            <person name="Durbin R.M."/>
            <person name="Hubbard T."/>
            <person name="Sulston J.E."/>
            <person name="Beck S."/>
            <person name="Bentley D.R."/>
            <person name="Rogers J."/>
            <person name="Ross M.T."/>
        </authorList>
    </citation>
    <scope>NUCLEOTIDE SEQUENCE [LARGE SCALE GENOMIC DNA]</scope>
</reference>
<reference key="7">
    <citation type="submission" date="2005-07" db="EMBL/GenBank/DDBJ databases">
        <authorList>
            <person name="Mural R.J."/>
            <person name="Istrail S."/>
            <person name="Sutton G.G."/>
            <person name="Florea L."/>
            <person name="Halpern A.L."/>
            <person name="Mobarry C.M."/>
            <person name="Lippert R."/>
            <person name="Walenz B."/>
            <person name="Shatkay H."/>
            <person name="Dew I."/>
            <person name="Miller J.R."/>
            <person name="Flanigan M.J."/>
            <person name="Edwards N.J."/>
            <person name="Bolanos R."/>
            <person name="Fasulo D."/>
            <person name="Halldorsson B.V."/>
            <person name="Hannenhalli S."/>
            <person name="Turner R."/>
            <person name="Yooseph S."/>
            <person name="Lu F."/>
            <person name="Nusskern D.R."/>
            <person name="Shue B.C."/>
            <person name="Zheng X.H."/>
            <person name="Zhong F."/>
            <person name="Delcher A.L."/>
            <person name="Huson D.H."/>
            <person name="Kravitz S.A."/>
            <person name="Mouchard L."/>
            <person name="Reinert K."/>
            <person name="Remington K.A."/>
            <person name="Clark A.G."/>
            <person name="Waterman M.S."/>
            <person name="Eichler E.E."/>
            <person name="Adams M.D."/>
            <person name="Hunkapiller M.W."/>
            <person name="Myers E.W."/>
            <person name="Venter J.C."/>
        </authorList>
    </citation>
    <scope>NUCLEOTIDE SEQUENCE [LARGE SCALE GENOMIC DNA]</scope>
</reference>
<reference key="8">
    <citation type="journal article" date="2004" name="Genome Res.">
        <title>The status, quality, and expansion of the NIH full-length cDNA project: the Mammalian Gene Collection (MGC).</title>
        <authorList>
            <consortium name="The MGC Project Team"/>
        </authorList>
    </citation>
    <scope>NUCLEOTIDE SEQUENCE [LARGE SCALE MRNA] (ISOFORM 1)</scope>
    <source>
        <tissue>Lung</tissue>
    </source>
</reference>
<reference key="9">
    <citation type="submission" date="1992-05" db="EMBL/GenBank/DDBJ databases">
        <title>Cloning and nucleotide sequence of the human(5HT) type 2 receptor.</title>
        <authorList>
            <person name="Tritch R.J."/>
            <person name="Robinson D.L."/>
            <person name="Sahagan B.G."/>
            <person name="Horlick R.A."/>
        </authorList>
    </citation>
    <scope>NUCLEOTIDE SEQUENCE [MRNA] OF 9-464 (ISOFORM 1)</scope>
    <source>
        <tissue>Brain</tissue>
    </source>
</reference>
<reference key="10">
    <citation type="journal article" date="1992" name="Eur. J. Pharmacol.">
        <title>Genomic organization, coding sequence and functional expression of human 5-HT2 and 5-HT1A receptor genes.</title>
        <authorList>
            <person name="Stam N.J."/>
            <person name="van Huizen F."/>
            <person name="van Alebeek C."/>
            <person name="Brands J."/>
            <person name="Dijkema R."/>
            <person name="Tonnaer J.A."/>
            <person name="Olijve W."/>
        </authorList>
    </citation>
    <scope>NUCLEOTIDE SEQUENCE [GENOMIC DNA] OF 105-218</scope>
    <scope>FUNCTION</scope>
    <scope>SUBCELLULAR LOCATION</scope>
</reference>
<reference key="11">
    <citation type="journal article" date="2001" name="J. Biol. Chem.">
        <title>Interaction of serotonin 5-hydroxytryptamine type 2C receptors with PDZ10 of the multi-PDZ domain protein MUPP1.</title>
        <authorList>
            <person name="Becamel C."/>
            <person name="Figge A."/>
            <person name="Poliak S."/>
            <person name="Dumuis A."/>
            <person name="Peles E."/>
            <person name="Bockaert J."/>
            <person name="Luebbert H."/>
            <person name="Ullmer C."/>
        </authorList>
    </citation>
    <scope>INTERACTION WITH MPDZ</scope>
</reference>
<reference key="12">
    <citation type="journal article" date="2004" name="J. Biol. Chem.">
        <title>The serotonin 5-HT2A and 5-HT2C receptors interact with specific sets of PDZ proteins.</title>
        <authorList>
            <person name="Becamel C."/>
            <person name="Gavarini S."/>
            <person name="Chanrion B."/>
            <person name="Alonso G."/>
            <person name="Galeotti N."/>
            <person name="Dumuis A."/>
            <person name="Bockaert J."/>
            <person name="Marin P."/>
        </authorList>
    </citation>
    <scope>INTERACTION WITH PATJ; MPP3; PRDX6; DLG4; DLG1; CASK; APBA1 AND MAGI2</scope>
    <scope>MUTAGENESIS OF GLY-463; ASN-465; CYS-470 AND VAL-471</scope>
</reference>
<reference key="13">
    <citation type="journal article" date="2008" name="Chem. Rev.">
        <title>Serotonin receptors.</title>
        <authorList>
            <person name="Nichols D.E."/>
            <person name="Nichols C.D."/>
        </authorList>
    </citation>
    <scope>REVIEW</scope>
</reference>
<reference key="14">
    <citation type="journal article" date="2008" name="Eur. J. Pharmacol.">
        <title>Agonist-directed trafficking of signalling at serotonin 5-HT2A, 5-HT2B and 5-HT2C-VSV receptors mediated Gq/11 activation and calcium mobilisation in CHO cells.</title>
        <authorList>
            <person name="Cussac D."/>
            <person name="Boutet-Robinet E."/>
            <person name="Ailhaud M.C."/>
            <person name="Newman-Tancredi A."/>
            <person name="Martel J.C."/>
            <person name="Danty N."/>
            <person name="Rauly-Lestienne I."/>
        </authorList>
    </citation>
    <scope>FUNCTION</scope>
    <scope>SUBCELLULAR LOCATION</scope>
</reference>
<reference key="15">
    <citation type="journal article" date="2008" name="Nature">
        <title>Identification of a serotonin/glutamate receptor complex implicated in psychosis.</title>
        <authorList>
            <person name="Gonzalez-Maeso J."/>
            <person name="Ang R.L."/>
            <person name="Yuen T."/>
            <person name="Chan P."/>
            <person name="Weisstaub N.V."/>
            <person name="Lopez-Gimenez J.F."/>
            <person name="Zhou M."/>
            <person name="Okawa Y."/>
            <person name="Callado L.F."/>
            <person name="Milligan G."/>
            <person name="Gingrich J.A."/>
            <person name="Filizola M."/>
            <person name="Meana J.J."/>
            <person name="Sealfon S.C."/>
        </authorList>
    </citation>
    <scope>INTERACTION WITH GRM2</scope>
    <scope>FUNCTION</scope>
    <scope>TISSUE SPECIFICITY</scope>
    <scope>SUBCELLULAR LOCATION</scope>
</reference>
<reference key="16">
    <citation type="journal article" date="2009" name="Naunyn Schmiedebergs Arch. Pharmacol.">
        <title>Pharmacological characterization of mitogen-activated protein kinase activation by recombinant human 5-HT2C, 5-HT2A, and 5-HT2B receptors.</title>
        <authorList>
            <person name="Knauer C.S."/>
            <person name="Campbell J.E."/>
            <person name="Chio C.L."/>
            <person name="Fitzgerald L.W."/>
        </authorList>
    </citation>
    <scope>FUNCTION</scope>
</reference>
<reference key="17">
    <citation type="journal article" date="2011" name="Neuropharmacology">
        <title>Functional crosstalk and heteromerization of serotonin 5-HT2A and dopamine D2 receptors.</title>
        <authorList>
            <person name="Albizu L."/>
            <person name="Holloway T."/>
            <person name="Gonzalez-Maeso J."/>
            <person name="Sealfon S.C."/>
        </authorList>
    </citation>
    <scope>INTERACTION WITH DRD2</scope>
    <scope>FUNCTION</scope>
    <scope>SUBCELLULAR LOCATION</scope>
</reference>
<reference key="18">
    <citation type="journal article" date="2011" name="Physiol. Res.">
        <title>Serotonin receptors - from molecular biology to clinical applications.</title>
        <authorList>
            <person name="Pytliak M."/>
            <person name="Vargova V."/>
            <person name="Mechirova V."/>
            <person name="Felsoci M."/>
        </authorList>
    </citation>
    <scope>REVIEW</scope>
</reference>
<reference key="19">
    <citation type="journal article" date="2012" name="Neuropharmacology">
        <title>Heterocomplex formation of 5-HT2A-mGlu2 and its relevance for cellular signaling cascades.</title>
        <authorList>
            <person name="Delille H.K."/>
            <person name="Becker J.M."/>
            <person name="Burkhardt S."/>
            <person name="Bleher B."/>
            <person name="Terstappen G.C."/>
            <person name="Schmidt M."/>
            <person name="Meyer A.H."/>
            <person name="Unger L."/>
            <person name="Marek G.J."/>
            <person name="Mezler M."/>
        </authorList>
    </citation>
    <scope>INTERACTION WITH GRM2</scope>
    <scope>FUNCTION</scope>
    <scope>SUBCELLULAR LOCATION</scope>
</reference>
<reference key="20">
    <citation type="journal article" date="2014" name="Mol. Cell. Proteomics">
        <title>Quantitative phosphoproteomics unravels biased phosphorylation of serotonin 2A receptor at Ser280 by hallucinogenic versus nonhallucinogenic agonists.</title>
        <authorList>
            <person name="Karaki S."/>
            <person name="Becamel C."/>
            <person name="Murat S."/>
            <person name="Mannoury la Cour C."/>
            <person name="Millan M.J."/>
            <person name="Prezeau L."/>
            <person name="Bockaert J."/>
            <person name="Marin P."/>
            <person name="Vandermoere F."/>
        </authorList>
    </citation>
    <scope>PHOSPHORYLATION AT SER-280</scope>
    <scope>MUTAGENESIS OF SER-280</scope>
</reference>
<reference key="21">
    <citation type="journal article" date="2013" name="J. Virol.">
        <title>5-HT2 receptors facilitate JC polyomavirus entry.</title>
        <authorList>
            <person name="Assetta B."/>
            <person name="Maginnis M.S."/>
            <person name="Gracia Ahufinger I."/>
            <person name="Haley S.A."/>
            <person name="Gee G.V."/>
            <person name="Nelson C.D."/>
            <person name="O'Hara B.A."/>
            <person name="Allen Ramdial S.A."/>
            <person name="Atwood W.J."/>
        </authorList>
    </citation>
    <scope>FUNCTION (MICROBIAL INFECTION)</scope>
</reference>
<reference key="22">
    <citation type="journal article" date="2017" name="Cell">
        <title>Crystal structure of an LSD-bound human serotonin receptor.</title>
        <authorList>
            <person name="Wacker D."/>
            <person name="Wang S."/>
            <person name="McCorvy J.D."/>
            <person name="Betz R.M."/>
            <person name="Venkatakrishnan A.J."/>
            <person name="Levit A."/>
            <person name="Lansu K."/>
            <person name="Schools Z.L."/>
            <person name="Che T."/>
            <person name="Nichols D.E."/>
            <person name="Shoichet B.K."/>
            <person name="Dror R.O."/>
            <person name="Roth B.L."/>
        </authorList>
    </citation>
    <scope>FUNCTION</scope>
    <scope>MUTAGENESIS OF LEU-229</scope>
</reference>
<reference evidence="30" key="23">
    <citation type="journal article" date="2022" name="Nature">
        <title>Bespoke library docking for 5-HT2A receptor agonists with antidepressant activity.</title>
        <authorList>
            <person name="Kaplan A.L."/>
            <person name="Confair D.N."/>
            <person name="Kim K."/>
            <person name="Barros-Alvarez X."/>
            <person name="Rodriguiz R.M."/>
            <person name="Yang Y."/>
            <person name="Kweon O.S."/>
            <person name="Che T."/>
            <person name="McCorvy J.D."/>
            <person name="Kamber D.N."/>
            <person name="Phelan J.P."/>
            <person name="Martins L.C."/>
            <person name="Pogorelov V.M."/>
            <person name="DiBerto J.F."/>
            <person name="Slocum S.T."/>
            <person name="Huang X.P."/>
            <person name="Kumar J.M."/>
            <person name="Robertson M.J."/>
            <person name="Panova O."/>
            <person name="Seven A.B."/>
            <person name="Wetsel A.Q."/>
            <person name="Wetsel W.C."/>
            <person name="Irwin J.J."/>
            <person name="Skiniotis G."/>
            <person name="Shoichet B.K."/>
            <person name="Roth B.L."/>
            <person name="Ellman J.A."/>
        </authorList>
    </citation>
    <scope>STRUCTURE BY ELECTRON MICROSCOPY (3.45 ANGSTROMS) OF 66-404 IN COMPLEX WITH GNAI2/GNAS CHIMERA; GNB1; GNG2; STABILIZING ANTIBODY AND SYNTHETIC HTR2A TETRAHYDROPYRIDINE AGONIST</scope>
    <scope>DISULFIDE BOND</scope>
</reference>
<reference evidence="31 32 33 34 35 36" key="24">
    <citation type="journal article" date="2022" name="Science">
        <title>Structure-based discovery of nonhallucinogenic psychedelic analogs.</title>
        <authorList>
            <person name="Cao D."/>
            <person name="Yu J."/>
            <person name="Wang H."/>
            <person name="Luo Z."/>
            <person name="Liu X."/>
            <person name="He L."/>
            <person name="Qi J."/>
            <person name="Fan L."/>
            <person name="Tang L."/>
            <person name="Chen Z."/>
            <person name="Li J."/>
            <person name="Cheng J."/>
            <person name="Wang S."/>
        </authorList>
    </citation>
    <scope>X-RAY CRYSTALLOGRAPHY (2.45 ANGSTROMS) OF 67-403 IN COMPLEX WITH SEROTONIN</scope>
    <scope>FUNCTION</scope>
    <scope>ACTIVITY REGULATION</scope>
    <scope>MUTAGENESIS OF TRP-151; ASP-155; SER-239; SER-242 AND LEU-362</scope>
</reference>
<reference evidence="37" key="25">
    <citation type="journal article" date="2024" name="Cell">
        <title>Flexible scaffold-based cheminformatics approach for polypharmacological drug design.</title>
        <authorList>
            <person name="Chen Z."/>
            <person name="Yu J."/>
            <person name="Wang H."/>
            <person name="Xu P."/>
            <person name="Fan L."/>
            <person name="Sun F."/>
            <person name="Huang S."/>
            <person name="Zhang P."/>
            <person name="Huang H."/>
            <person name="Gu S."/>
            <person name="Zhang B."/>
            <person name="Zhou Y."/>
            <person name="Wan X."/>
            <person name="Pei G."/>
            <person name="Xu H.E."/>
            <person name="Cheng J."/>
            <person name="Wang S."/>
        </authorList>
    </citation>
    <scope>STRUCTURE BY ELECTRON MICROSCOPY (3.0 ANGSTROMS) OF 70-265</scope>
    <scope>FUNCTION</scope>
    <scope>ACTIVITY REGULATION</scope>
</reference>
<reference key="26">
    <citation type="journal article" date="1996" name="Hum. Genet.">
        <title>Systematic screening for mutations in the human serotonin-2A (5-HT2A) receptor gene: identification of two naturally occurring receptor variants and association analysis in schizophrenia.</title>
        <authorList>
            <person name="Erdmann J."/>
            <person name="Shimron-Abarbanell D."/>
            <person name="Rietschel M."/>
            <person name="Albus M."/>
            <person name="Maier W."/>
            <person name="Koerner J."/>
            <person name="Bondy B."/>
            <person name="Chen K."/>
            <person name="Shih J.C."/>
            <person name="Knapp M."/>
            <person name="Propping P."/>
            <person name="Noethen M.M."/>
        </authorList>
    </citation>
    <scope>VARIANTS ASN-25 AND TYR-452</scope>
</reference>
<reference key="27">
    <citation type="journal article" date="1999" name="Am. J. Med. Genet.">
        <title>Unified approach to the analysis of genetic variation in serotonergic pathways.</title>
        <authorList>
            <person name="Marshall S.E."/>
            <person name="Bird T.G."/>
            <person name="Hart K."/>
            <person name="Welsh K.I."/>
        </authorList>
    </citation>
    <scope>VARIANTS ASN-25 AND TYR-452</scope>
</reference>
<reference key="28">
    <citation type="journal article" date="1999" name="Nat. Genet.">
        <title>Characterization of single-nucleotide polymorphisms in coding regions of human genes.</title>
        <authorList>
            <person name="Cargill M."/>
            <person name="Altshuler D."/>
            <person name="Ireland J."/>
            <person name="Sklar P."/>
            <person name="Ardlie K."/>
            <person name="Patil N."/>
            <person name="Shaw N."/>
            <person name="Lane C.R."/>
            <person name="Lim E.P."/>
            <person name="Kalyanaraman N."/>
            <person name="Nemesh J."/>
            <person name="Ziaugra L."/>
            <person name="Friedland L."/>
            <person name="Rolfe A."/>
            <person name="Warrington J."/>
            <person name="Lipshutz R."/>
            <person name="Daley G.Q."/>
            <person name="Lander E.S."/>
        </authorList>
    </citation>
    <scope>VARIANTS VAL-197; VAL-447 AND TYR-452</scope>
</reference>
<reference key="29">
    <citation type="journal article" date="1999" name="Nat. Genet.">
        <authorList>
            <person name="Cargill M."/>
            <person name="Altshuler D."/>
            <person name="Ireland J."/>
            <person name="Sklar P."/>
            <person name="Ardlie K."/>
            <person name="Patil N."/>
            <person name="Shaw N."/>
            <person name="Lane C.R."/>
            <person name="Lim E.P."/>
            <person name="Kalyanaraman N."/>
            <person name="Nemesh J."/>
            <person name="Ziaugra L."/>
            <person name="Friedland L."/>
            <person name="Rolfe A."/>
            <person name="Warrington J."/>
            <person name="Lipshutz R."/>
            <person name="Daley G.Q."/>
            <person name="Lander E.S."/>
        </authorList>
    </citation>
    <scope>ERRATUM OF PUBMED:10391209</scope>
</reference>
<feature type="chain" id="PRO_0000068946" description="5-hydroxytryptamine receptor 2A">
    <location>
        <begin position="1"/>
        <end position="471"/>
    </location>
</feature>
<feature type="topological domain" description="Extracellular" evidence="21 30">
    <location>
        <begin position="1"/>
        <end position="80"/>
    </location>
</feature>
<feature type="transmembrane region" description="Helical; Name=1" evidence="21 30">
    <location>
        <begin position="81"/>
        <end position="97"/>
    </location>
</feature>
<feature type="topological domain" description="Cytoplasmic" evidence="21 30">
    <location>
        <begin position="98"/>
        <end position="111"/>
    </location>
</feature>
<feature type="transmembrane region" description="Helical; Name=2" evidence="21 30">
    <location>
        <begin position="112"/>
        <end position="137"/>
    </location>
</feature>
<feature type="topological domain" description="Extracellular" evidence="21 30">
    <location>
        <begin position="138"/>
        <end position="146"/>
    </location>
</feature>
<feature type="transmembrane region" description="Helical; Name=3" evidence="21 30">
    <location>
        <begin position="147"/>
        <end position="171"/>
    </location>
</feature>
<feature type="topological domain" description="Cytoplasmic" evidence="21 30">
    <location>
        <begin position="172"/>
        <end position="191"/>
    </location>
</feature>
<feature type="transmembrane region" description="Helical; Name=4" evidence="21 30">
    <location>
        <begin position="192"/>
        <end position="215"/>
    </location>
</feature>
<feature type="topological domain" description="Extracellular" evidence="21 30">
    <location>
        <begin position="216"/>
        <end position="232"/>
    </location>
</feature>
<feature type="transmembrane region" description="Helical; Name=5" evidence="21 30">
    <location>
        <begin position="233"/>
        <end position="258"/>
    </location>
</feature>
<feature type="topological domain" description="Cytoplasmic" evidence="21 30">
    <location>
        <begin position="259"/>
        <end position="322"/>
    </location>
</feature>
<feature type="transmembrane region" description="Helical; Name=6" evidence="21 30">
    <location>
        <begin position="323"/>
        <end position="348"/>
    </location>
</feature>
<feature type="topological domain" description="Extracellular" evidence="21 30">
    <location>
        <begin position="349"/>
        <end position="356"/>
    </location>
</feature>
<feature type="transmembrane region" description="Helical; Name=7" evidence="21 30">
    <location>
        <begin position="357"/>
        <end position="382"/>
    </location>
</feature>
<feature type="topological domain" description="Cytoplasmic" evidence="21 30">
    <location>
        <begin position="383"/>
        <end position="471"/>
    </location>
</feature>
<feature type="region of interest" description="Disordered" evidence="6">
    <location>
        <begin position="451"/>
        <end position="471"/>
    </location>
</feature>
<feature type="short sequence motif" description="DRY motif; important for ligand-induced conformation changes" evidence="3">
    <location>
        <begin position="172"/>
        <end position="174"/>
    </location>
</feature>
<feature type="short sequence motif" description="NPxxY motif; important for ligand-induced conformation changes and signaling" evidence="3">
    <location>
        <begin position="376"/>
        <end position="380"/>
    </location>
</feature>
<feature type="short sequence motif" description="PDZ-binding" evidence="9 11">
    <location>
        <begin position="469"/>
        <end position="471"/>
    </location>
</feature>
<feature type="compositionally biased region" description="Basic and acidic residues" evidence="6">
    <location>
        <begin position="451"/>
        <end position="465"/>
    </location>
</feature>
<feature type="binding site" evidence="20 31">
    <location>
        <position position="155"/>
    </location>
    <ligand>
        <name>serotonin</name>
        <dbReference type="ChEBI" id="CHEBI:350546"/>
    </ligand>
</feature>
<feature type="binding site" evidence="28 31">
    <location>
        <position position="343"/>
    </location>
    <ligand>
        <name>serotonin</name>
        <dbReference type="ChEBI" id="CHEBI:350546"/>
    </ligand>
</feature>
<feature type="site" description="Hydrophobic barrier that decreases the speed of ligand binding and dissociation" evidence="19">
    <location>
        <position position="229"/>
    </location>
</feature>
<feature type="modified residue" description="Phosphoserine" evidence="18">
    <location>
        <position position="280"/>
    </location>
</feature>
<feature type="glycosylation site" description="N-linked (GlcNAc...) asparagine" evidence="4">
    <location>
        <position position="8"/>
    </location>
</feature>
<feature type="glycosylation site" description="N-linked (GlcNAc...) asparagine" evidence="4">
    <location>
        <position position="38"/>
    </location>
</feature>
<feature type="glycosylation site" description="N-linked (GlcNAc...) asparagine" evidence="4">
    <location>
        <position position="44"/>
    </location>
</feature>
<feature type="glycosylation site" description="N-linked (GlcNAc...) asparagine" evidence="4">
    <location>
        <position position="51"/>
    </location>
</feature>
<feature type="glycosylation site" description="N-linked (GlcNAc...) asparagine" evidence="4">
    <location>
        <position position="54"/>
    </location>
</feature>
<feature type="disulfide bond" evidence="5 20 21 22 30 31">
    <location>
        <begin position="148"/>
        <end position="227"/>
    </location>
</feature>
<feature type="disulfide bond" evidence="5 20 22">
    <location>
        <begin position="349"/>
        <end position="353"/>
    </location>
</feature>
<feature type="splice variant" id="VSP_046663" description="In isoform 2." evidence="24">
    <original>MDILCEENTSLSSTTNSLMQLNDDTRLYSNDFNSGEANTSDAFNWTVDSENRTNLSCEGCLSPSCLSLLHLQEKNWSALLTAVVIILTIAGNILVIMAVSLEKKLQNATNYFLMSLAIADMLLGFLVMPVSMLTILYG</original>
    <variation>MQFLKSAKQKPNYYHIMLVEDQEEGTLHQFNYCERCSESQNNKCISCVDPEDKW</variation>
    <location>
        <begin position="1"/>
        <end position="138"/>
    </location>
</feature>
<feature type="sequence variant" id="VAR_003448" description="In dbSNP:rs1805055." evidence="8 23">
    <original>T</original>
    <variation>N</variation>
    <location>
        <position position="25"/>
    </location>
</feature>
<feature type="sequence variant" id="VAR_013901" description="In dbSNP:rs6304." evidence="7">
    <original>I</original>
    <variation>V</variation>
    <location>
        <position position="197"/>
    </location>
</feature>
<feature type="sequence variant" id="VAR_013902" description="In dbSNP:rs6308." evidence="7">
    <original>A</original>
    <variation>V</variation>
    <location>
        <position position="447"/>
    </location>
</feature>
<feature type="sequence variant" id="VAR_003449" description="In dbSNP:rs6314." evidence="7 8 23">
    <original>H</original>
    <variation>Y</variation>
    <location>
        <position position="452"/>
    </location>
</feature>
<feature type="mutagenesis site" description="Decreased ability to bind serotonin and psilocybin." evidence="20">
    <original>W</original>
    <variation>A</variation>
    <variation>F</variation>
    <location>
        <position position="151"/>
    </location>
</feature>
<feature type="mutagenesis site" description="Abolished binding to serotonin and psilocybin." evidence="20">
    <original>D</original>
    <variation>A</variation>
    <location>
        <position position="155"/>
    </location>
</feature>
<feature type="mutagenesis site" description="Strongly increases dissociation of bound lysergic acid diethylamine, without affecting binding affinity. Reduces signaling via arrestins, but has no effect on signaling via the phosphatidylinositol-calcium second messenger system." evidence="19">
    <original>L</original>
    <variation>A</variation>
    <location>
        <position position="229"/>
    </location>
</feature>
<feature type="mutagenesis site" description="Decreased ability to bind serotonin and psilocybin." evidence="20">
    <original>S</original>
    <variation>A</variation>
    <location>
        <position position="239"/>
    </location>
</feature>
<feature type="mutagenesis site" description="Decreased ability to bind serotonin and psilocybin." evidence="20">
    <original>S</original>
    <variation>A</variation>
    <location>
        <position position="242"/>
    </location>
</feature>
<feature type="mutagenesis site" description="Increased ability of hallucinogens to desensitize the receptor." evidence="18">
    <original>S</original>
    <variation>A</variation>
    <location>
        <position position="280"/>
    </location>
</feature>
<feature type="mutagenesis site" description="Reduced receptor desensitization by nonhallucinogenic agonists." evidence="18">
    <original>S</original>
    <variation>D</variation>
    <location>
        <position position="280"/>
    </location>
</feature>
<feature type="mutagenesis site" description="Decreased ability to bind serotonin and psilocybin." evidence="20">
    <original>L</original>
    <variation>A</variation>
    <location>
        <position position="362"/>
    </location>
</feature>
<feature type="mutagenesis site" description="Loss of interaction with PATJ." evidence="11">
    <original>G</original>
    <variation>V</variation>
    <location>
        <position position="463"/>
    </location>
</feature>
<feature type="mutagenesis site" description="No effect on interaction with PATJ. Acquires the binding properties of HTR2C; when associated with S-470." evidence="11">
    <original>N</original>
    <variation>S</variation>
    <location>
        <position position="465"/>
    </location>
</feature>
<feature type="mutagenesis site" description="No effect on interaction with PATJ. Acquires the binding properties of HTR2C; when associated with S-465." evidence="11">
    <original>C</original>
    <variation>S</variation>
    <location>
        <position position="470"/>
    </location>
</feature>
<feature type="mutagenesis site" description="Loss of interaction with PATJ, CASK, APBA1, DLG1 and DLG4." evidence="11">
    <original>V</original>
    <variation>A</variation>
    <location>
        <position position="471"/>
    </location>
</feature>
<feature type="helix" evidence="38">
    <location>
        <begin position="72"/>
        <end position="75"/>
    </location>
</feature>
<feature type="helix" evidence="40">
    <location>
        <begin position="77"/>
        <end position="101"/>
    </location>
</feature>
<feature type="helix" evidence="40">
    <location>
        <begin position="103"/>
        <end position="105"/>
    </location>
</feature>
<feature type="helix" evidence="40">
    <location>
        <begin position="108"/>
        <end position="126"/>
    </location>
</feature>
<feature type="helix" evidence="40">
    <location>
        <begin position="128"/>
        <end position="135"/>
    </location>
</feature>
<feature type="turn" evidence="40">
    <location>
        <begin position="136"/>
        <end position="139"/>
    </location>
</feature>
<feature type="helix" evidence="40">
    <location>
        <begin position="147"/>
        <end position="178"/>
    </location>
</feature>
<feature type="helix" evidence="42">
    <location>
        <begin position="180"/>
        <end position="185"/>
    </location>
</feature>
<feature type="helix" evidence="40">
    <location>
        <begin position="189"/>
        <end position="207"/>
    </location>
</feature>
<feature type="helix" evidence="40">
    <location>
        <begin position="209"/>
        <end position="214"/>
    </location>
</feature>
<feature type="helix" evidence="40">
    <location>
        <begin position="218"/>
        <end position="220"/>
    </location>
</feature>
<feature type="strand" evidence="39">
    <location>
        <begin position="222"/>
        <end position="225"/>
    </location>
</feature>
<feature type="strand" evidence="40">
    <location>
        <begin position="226"/>
        <end position="228"/>
    </location>
</feature>
<feature type="helix" evidence="40">
    <location>
        <begin position="232"/>
        <end position="242"/>
    </location>
</feature>
<feature type="helix" evidence="40">
    <location>
        <begin position="244"/>
        <end position="265"/>
    </location>
</feature>
<feature type="helix" evidence="40">
    <location>
        <begin position="312"/>
        <end position="348"/>
    </location>
</feature>
<feature type="turn" evidence="41">
    <location>
        <begin position="350"/>
        <end position="352"/>
    </location>
</feature>
<feature type="helix" evidence="40">
    <location>
        <begin position="355"/>
        <end position="383"/>
    </location>
</feature>
<feature type="helix" evidence="40">
    <location>
        <begin position="385"/>
        <end position="395"/>
    </location>
</feature>
<feature type="sequence conflict" description="In Ref. 5; BAG63991." evidence="27" ref="5">
    <original>D</original>
    <variation>N</variation>
    <location sequence="P28223-2">
        <position position="49"/>
    </location>
</feature>
<organism>
    <name type="scientific">Homo sapiens</name>
    <name type="common">Human</name>
    <dbReference type="NCBI Taxonomy" id="9606"/>
    <lineage>
        <taxon>Eukaryota</taxon>
        <taxon>Metazoa</taxon>
        <taxon>Chordata</taxon>
        <taxon>Craniata</taxon>
        <taxon>Vertebrata</taxon>
        <taxon>Euteleostomi</taxon>
        <taxon>Mammalia</taxon>
        <taxon>Eutheria</taxon>
        <taxon>Euarchontoglires</taxon>
        <taxon>Primates</taxon>
        <taxon>Haplorrhini</taxon>
        <taxon>Catarrhini</taxon>
        <taxon>Hominidae</taxon>
        <taxon>Homo</taxon>
    </lineage>
</organism>
<keyword id="KW-0002">3D-structure</keyword>
<keyword id="KW-0025">Alternative splicing</keyword>
<keyword id="KW-0085">Behavior</keyword>
<keyword id="KW-1003">Cell membrane</keyword>
<keyword id="KW-0966">Cell projection</keyword>
<keyword id="KW-0968">Cytoplasmic vesicle</keyword>
<keyword id="KW-1015">Disulfide bond</keyword>
<keyword id="KW-0297">G-protein coupled receptor</keyword>
<keyword id="KW-0325">Glycoprotein</keyword>
<keyword id="KW-1183">Host cell receptor for virus entry</keyword>
<keyword id="KW-0945">Host-virus interaction</keyword>
<keyword id="KW-0472">Membrane</keyword>
<keyword id="KW-0597">Phosphoprotein</keyword>
<keyword id="KW-1267">Proteomics identification</keyword>
<keyword id="KW-0675">Receptor</keyword>
<keyword id="KW-1185">Reference proteome</keyword>
<keyword id="KW-0770">Synapse</keyword>
<keyword id="KW-0807">Transducer</keyword>
<keyword id="KW-0812">Transmembrane</keyword>
<keyword id="KW-1133">Transmembrane helix</keyword>
<gene>
    <name evidence="29" type="primary">HTR2A</name>
    <name type="synonym">HTR2</name>
</gene>
<name>5HT2A_HUMAN</name>
<evidence type="ECO:0000250" key="1">
    <source>
        <dbReference type="UniProtKB" id="P14842"/>
    </source>
</evidence>
<evidence type="ECO:0000250" key="2">
    <source>
        <dbReference type="UniProtKB" id="P35363"/>
    </source>
</evidence>
<evidence type="ECO:0000250" key="3">
    <source>
        <dbReference type="UniProtKB" id="P41595"/>
    </source>
</evidence>
<evidence type="ECO:0000255" key="4"/>
<evidence type="ECO:0000255" key="5">
    <source>
        <dbReference type="PROSITE-ProRule" id="PRU00521"/>
    </source>
</evidence>
<evidence type="ECO:0000256" key="6">
    <source>
        <dbReference type="SAM" id="MobiDB-lite"/>
    </source>
</evidence>
<evidence type="ECO:0000269" key="7">
    <source>
    </source>
</evidence>
<evidence type="ECO:0000269" key="8">
    <source>
    </source>
</evidence>
<evidence type="ECO:0000269" key="9">
    <source>
    </source>
</evidence>
<evidence type="ECO:0000269" key="10">
    <source>
    </source>
</evidence>
<evidence type="ECO:0000269" key="11">
    <source>
    </source>
</evidence>
<evidence type="ECO:0000269" key="12">
    <source>
    </source>
</evidence>
<evidence type="ECO:0000269" key="13">
    <source>
    </source>
</evidence>
<evidence type="ECO:0000269" key="14">
    <source>
    </source>
</evidence>
<evidence type="ECO:0000269" key="15">
    <source>
    </source>
</evidence>
<evidence type="ECO:0000269" key="16">
    <source>
    </source>
</evidence>
<evidence type="ECO:0000269" key="17">
    <source>
    </source>
</evidence>
<evidence type="ECO:0000269" key="18">
    <source>
    </source>
</evidence>
<evidence type="ECO:0000269" key="19">
    <source>
    </source>
</evidence>
<evidence type="ECO:0000269" key="20">
    <source>
    </source>
</evidence>
<evidence type="ECO:0000269" key="21">
    <source>
    </source>
</evidence>
<evidence type="ECO:0000269" key="22">
    <source>
    </source>
</evidence>
<evidence type="ECO:0000269" key="23">
    <source>
    </source>
</evidence>
<evidence type="ECO:0000303" key="24">
    <source>
    </source>
</evidence>
<evidence type="ECO:0000303" key="25">
    <source>
    </source>
</evidence>
<evidence type="ECO:0000303" key="26">
    <source>
    </source>
</evidence>
<evidence type="ECO:0000305" key="27"/>
<evidence type="ECO:0000305" key="28">
    <source>
    </source>
</evidence>
<evidence type="ECO:0000312" key="29">
    <source>
        <dbReference type="HGNC" id="HGNC:5293"/>
    </source>
</evidence>
<evidence type="ECO:0007744" key="30">
    <source>
        <dbReference type="PDB" id="7RAN"/>
    </source>
</evidence>
<evidence type="ECO:0007744" key="31">
    <source>
        <dbReference type="PDB" id="7WC4"/>
    </source>
</evidence>
<evidence type="ECO:0007744" key="32">
    <source>
        <dbReference type="PDB" id="7WC5"/>
    </source>
</evidence>
<evidence type="ECO:0007744" key="33">
    <source>
        <dbReference type="PDB" id="7WC6"/>
    </source>
</evidence>
<evidence type="ECO:0007744" key="34">
    <source>
        <dbReference type="PDB" id="7WC7"/>
    </source>
</evidence>
<evidence type="ECO:0007744" key="35">
    <source>
        <dbReference type="PDB" id="7WC8"/>
    </source>
</evidence>
<evidence type="ECO:0007744" key="36">
    <source>
        <dbReference type="PDB" id="7WC9"/>
    </source>
</evidence>
<evidence type="ECO:0007744" key="37">
    <source>
        <dbReference type="PDB" id="8JT8"/>
    </source>
</evidence>
<evidence type="ECO:0007829" key="38">
    <source>
        <dbReference type="PDB" id="6WH4"/>
    </source>
</evidence>
<evidence type="ECO:0007829" key="39">
    <source>
        <dbReference type="PDB" id="7WC6"/>
    </source>
</evidence>
<evidence type="ECO:0007829" key="40">
    <source>
        <dbReference type="PDB" id="7WC8"/>
    </source>
</evidence>
<evidence type="ECO:0007829" key="41">
    <source>
        <dbReference type="PDB" id="7WC9"/>
    </source>
</evidence>
<evidence type="ECO:0007829" key="42">
    <source>
        <dbReference type="PDB" id="8UWL"/>
    </source>
</evidence>
<accession>P28223</accession>
<accession>B2RAC5</accession>
<accession>B4DZ79</accession>
<accession>F5GWE8</accession>
<accession>Q5T8C0</accession>
<protein>
    <recommendedName>
        <fullName evidence="26">5-hydroxytryptamine receptor 2A</fullName>
        <shortName evidence="25">5-HT-2</shortName>
        <shortName evidence="26">5-HT-2A</shortName>
    </recommendedName>
    <alternativeName>
        <fullName evidence="26">Serotonin receptor 2A</fullName>
    </alternativeName>
</protein>
<comment type="function">
    <text evidence="2 10 12 13 14 15 16 19 20 22">G-protein coupled receptor for 5-hydroxytryptamine (serotonin) (PubMed:1330647, PubMed:18703043, PubMed:19057895, PubMed:21645528, PubMed:22300836, PubMed:35084960, PubMed:38552625). Also functions as a receptor for various drugs and psychoactive substances, including mescaline, psilocybin, 1-(2,5-dimethoxy-4-iodophenyl)-2-aminopropane (DOI) and lysergic acid diethylamide (LSD) (PubMed:28129538, PubMed:35084960). Ligand binding causes a conformation change that triggers signaling via guanine nucleotide-binding proteins (G proteins) and modulates the activity of downstream effectors (PubMed:28129538, PubMed:35084960). HTR2A is coupled to G(q)/G(11) G alpha proteins and activates phospholipase C-beta, releasing diacylglycerol (DAG) and inositol 1,4,5-trisphosphate (IP3) second messengers that modulate the activity of phosphatidylinositol 3-kinase and promote the release of Ca(2+) ions from intracellular stores, respectively (PubMed:18703043, PubMed:28129538, PubMed:35084960). Beta-arrestin family members inhibit signaling via G proteins and mediate activation of alternative signaling pathways (PubMed:28129538, PubMed:35084960). Affects neural activity, perception, cognition and mood (PubMed:18297054). Plays a role in the regulation of behavior, including responses to anxiogenic situations and psychoactive substances. Plays a role in intestinal smooth muscle contraction, and may play a role in arterial vasoconstriction (By similarity).</text>
</comment>
<comment type="function">
    <text evidence="17">(Microbial infection) Acts as a receptor for human JC polyomavirus/JCPyV.</text>
</comment>
<comment type="activity regulation">
    <text evidence="20 22">G-protein coupled receptor activity is regulated by lipids: oleamide increases HTR2A-mediated activity (PubMed:35084960). Inhibited by IHCH-7179 small molecule: IHCH-7179 acts both as an agonist activator for HTR1A and as an antagonist inhibitor for HTR2A (PubMed:38552625).</text>
</comment>
<comment type="subunit">
    <text evidence="9 11 12 15 16">Interacts (via C-terminus) with MPDZ and PATJ (PubMed:11150294, PubMed:14988405). May interact (via C-terminus) with MPP3, PRDX6, DLG4, DLG1, CASK, APBA1 and MAGI2 (PubMed:14988405). Interacts with GRM2 and DRD2; this may affect signaling (PubMed:18297054, PubMed:21645528, PubMed:22300836).</text>
</comment>
<comment type="interaction">
    <interactant intactId="EBI-6656333">
        <id>P28223</id>
    </interactant>
    <interactant intactId="EBI-6656333">
        <id>P28223</id>
        <label>HTR2A</label>
    </interactant>
    <organismsDiffer>false</organismsDiffer>
    <experiments>3</experiments>
</comment>
<comment type="interaction">
    <interactant intactId="EBI-6656333">
        <id>P28223</id>
    </interactant>
    <interactant intactId="EBI-7474947">
        <id>P41595</id>
        <label>HTR2B</label>
    </interactant>
    <organismsDiffer>false</organismsDiffer>
    <experiments>3</experiments>
</comment>
<comment type="interaction">
    <interactant intactId="EBI-6656333">
        <id>P28223</id>
    </interactant>
    <interactant intactId="EBI-994141">
        <id>P28335</id>
        <label>HTR2C</label>
    </interactant>
    <organismsDiffer>false</organismsDiffer>
    <experiments>5</experiments>
</comment>
<comment type="interaction">
    <interactant intactId="EBI-15573967">
        <id>P28223-1</id>
    </interactant>
    <interactant intactId="EBI-10232876">
        <id>Q14416</id>
        <label>GRM2</label>
    </interactant>
    <organismsDiffer>false</organismsDiffer>
    <experiments>4</experiments>
</comment>
<comment type="interaction">
    <interactant intactId="EBI-15573967">
        <id>P28223-1</id>
    </interactant>
    <interactant intactId="EBI-21299643">
        <id>P28335-1</id>
        <label>HTR2C</label>
    </interactant>
    <organismsDiffer>false</organismsDiffer>
    <experiments>3</experiments>
</comment>
<comment type="interaction">
    <interactant intactId="EBI-15573967">
        <id>P28223-1</id>
    </interactant>
    <interactant intactId="EBI-397744">
        <id>P18654</id>
        <label>Rps6ka3</label>
    </interactant>
    <organismsDiffer>true</organismsDiffer>
    <experiments>2</experiments>
</comment>
<comment type="subcellular location">
    <subcellularLocation>
        <location evidence="19">Cell membrane</location>
        <topology evidence="21">Multi-pass membrane protein</topology>
    </subcellularLocation>
    <subcellularLocation>
        <location evidence="2">Cell projection</location>
        <location evidence="2">Dendrite</location>
    </subcellularLocation>
    <subcellularLocation>
        <location evidence="1">Cell projection</location>
        <location evidence="1">Axon</location>
    </subcellularLocation>
    <subcellularLocation>
        <location evidence="1">Cytoplasmic vesicle</location>
    </subcellularLocation>
    <subcellularLocation>
        <location evidence="1">Membrane</location>
        <location evidence="1">Caveola</location>
    </subcellularLocation>
    <subcellularLocation>
        <location evidence="1">Presynapse</location>
    </subcellularLocation>
</comment>
<comment type="alternative products">
    <event type="alternative splicing"/>
    <isoform>
        <id>P28223-1</id>
        <name>1</name>
        <sequence type="displayed"/>
    </isoform>
    <isoform>
        <id>P28223-2</id>
        <name>2</name>
        <sequence type="described" ref="VSP_046663"/>
    </isoform>
</comment>
<comment type="tissue specificity">
    <text evidence="12">Detected in brain cortex (at protein level). Detected in blood platelets.</text>
</comment>
<comment type="domain">
    <text evidence="9 11">The PDZ domain-binding motif is involved in the interaction with PATJ, CASK, APBA1, DLG1 and DLG4.</text>
</comment>
<comment type="miscellaneous">
    <text evidence="19">Binds lysergic acid diethylamine (LSD) in the orthosteric pocket (PubMed:28129538). Bound LSD dissociates extremely slowly, with a residence time of about 221 minutes at 37 degrees Celsius (PubMed:28129538).</text>
</comment>
<comment type="similarity">
    <text evidence="5">Belongs to the G-protein coupled receptor 1 family.</text>
</comment>
<dbReference type="EMBL" id="X57830">
    <property type="protein sequence ID" value="CAA40963.1"/>
    <property type="molecule type" value="mRNA"/>
</dbReference>
<dbReference type="EMBL" id="S42168">
    <property type="protein sequence ID" value="AAB22791.2"/>
    <property type="molecule type" value="Genomic_DNA"/>
</dbReference>
<dbReference type="EMBL" id="S42165">
    <property type="protein sequence ID" value="AAB22791.2"/>
    <property type="status" value="JOINED"/>
    <property type="molecule type" value="Genomic_DNA"/>
</dbReference>
<dbReference type="EMBL" id="S42167">
    <property type="protein sequence ID" value="AAB22791.2"/>
    <property type="status" value="JOINED"/>
    <property type="molecule type" value="Genomic_DNA"/>
</dbReference>
<dbReference type="EMBL" id="S71229">
    <property type="protein sequence ID" value="AAB31320.1"/>
    <property type="molecule type" value="mRNA"/>
</dbReference>
<dbReference type="EMBL" id="AF498982">
    <property type="protein sequence ID" value="AAM21129.1"/>
    <property type="molecule type" value="mRNA"/>
</dbReference>
<dbReference type="EMBL" id="AK302787">
    <property type="protein sequence ID" value="BAG63991.1"/>
    <property type="molecule type" value="mRNA"/>
</dbReference>
<dbReference type="EMBL" id="AK314132">
    <property type="protein sequence ID" value="BAG36822.1"/>
    <property type="molecule type" value="mRNA"/>
</dbReference>
<dbReference type="EMBL" id="AL160397">
    <property type="status" value="NOT_ANNOTATED_CDS"/>
    <property type="molecule type" value="Genomic_DNA"/>
</dbReference>
<dbReference type="EMBL" id="AL136958">
    <property type="status" value="NOT_ANNOTATED_CDS"/>
    <property type="molecule type" value="Genomic_DNA"/>
</dbReference>
<dbReference type="EMBL" id="CH471075">
    <property type="protein sequence ID" value="EAX08770.1"/>
    <property type="molecule type" value="Genomic_DNA"/>
</dbReference>
<dbReference type="EMBL" id="BC069356">
    <property type="protein sequence ID" value="AAH69356.1"/>
    <property type="molecule type" value="mRNA"/>
</dbReference>
<dbReference type="EMBL" id="BC069576">
    <property type="protein sequence ID" value="AAH69576.1"/>
    <property type="molecule type" value="mRNA"/>
</dbReference>
<dbReference type="EMBL" id="BC074848">
    <property type="protein sequence ID" value="AAH74848.1"/>
    <property type="molecule type" value="mRNA"/>
</dbReference>
<dbReference type="EMBL" id="BC074849">
    <property type="protein sequence ID" value="AAH74849.1"/>
    <property type="molecule type" value="mRNA"/>
</dbReference>
<dbReference type="EMBL" id="BC096839">
    <property type="protein sequence ID" value="AAH96839.1"/>
    <property type="molecule type" value="mRNA"/>
</dbReference>
<dbReference type="EMBL" id="M86841">
    <property type="protein sequence ID" value="AAA58354.1"/>
    <property type="molecule type" value="mRNA"/>
</dbReference>
<dbReference type="EMBL" id="S50130">
    <property type="protein sequence ID" value="AAB24166.2"/>
    <property type="molecule type" value="Genomic_DNA"/>
</dbReference>
<dbReference type="EMBL" id="S49737">
    <property type="protein sequence ID" value="AAB24166.2"/>
    <property type="status" value="JOINED"/>
    <property type="molecule type" value="Genomic_DNA"/>
</dbReference>
<dbReference type="EMBL" id="S50113">
    <property type="protein sequence ID" value="AAB24166.2"/>
    <property type="status" value="JOINED"/>
    <property type="molecule type" value="Genomic_DNA"/>
</dbReference>
<dbReference type="CCDS" id="CCDS9405.1">
    <molecule id="P28223-1"/>
</dbReference>
<dbReference type="PIR" id="A43956">
    <property type="entry name" value="A43956"/>
</dbReference>
<dbReference type="RefSeq" id="NP_000612.1">
    <molecule id="P28223-1"/>
    <property type="nucleotide sequence ID" value="NM_000621.5"/>
</dbReference>
<dbReference type="RefSeq" id="NP_001159419.1">
    <property type="nucleotide sequence ID" value="NM_001165947.2"/>
</dbReference>
<dbReference type="RefSeq" id="NP_001365853.1">
    <molecule id="P28223-1"/>
    <property type="nucleotide sequence ID" value="NM_001378924.1"/>
</dbReference>
<dbReference type="PDB" id="6A93">
    <property type="method" value="X-ray"/>
    <property type="resolution" value="3.00 A"/>
    <property type="chains" value="A/B=70-265, A/B=313-403"/>
</dbReference>
<dbReference type="PDB" id="6A94">
    <property type="method" value="X-ray"/>
    <property type="resolution" value="2.90 A"/>
    <property type="chains" value="A/B=70-265, A/B=313-403"/>
</dbReference>
<dbReference type="PDB" id="6WGT">
    <property type="method" value="X-ray"/>
    <property type="resolution" value="3.40 A"/>
    <property type="chains" value="A/B/C=66-265, A/B/C=311-405"/>
</dbReference>
<dbReference type="PDB" id="6WH4">
    <property type="method" value="X-ray"/>
    <property type="resolution" value="3.40 A"/>
    <property type="chains" value="A/B/C=66-265, A/B/C=311-405"/>
</dbReference>
<dbReference type="PDB" id="6WHA">
    <property type="method" value="EM"/>
    <property type="resolution" value="3.36 A"/>
    <property type="chains" value="A=66-404"/>
</dbReference>
<dbReference type="PDB" id="7RAN">
    <property type="method" value="EM"/>
    <property type="resolution" value="3.45 A"/>
    <property type="chains" value="A=66-404"/>
</dbReference>
<dbReference type="PDB" id="7VOD">
    <property type="method" value="X-ray"/>
    <property type="resolution" value="3.30 A"/>
    <property type="chains" value="A=70-265, A=313-403"/>
</dbReference>
<dbReference type="PDB" id="7VOE">
    <property type="method" value="X-ray"/>
    <property type="resolution" value="2.90 A"/>
    <property type="chains" value="A=70-265, A=313-403"/>
</dbReference>
<dbReference type="PDB" id="7WC4">
    <property type="method" value="X-ray"/>
    <property type="resolution" value="3.20 A"/>
    <property type="chains" value="A=67-403"/>
</dbReference>
<dbReference type="PDB" id="7WC5">
    <property type="method" value="X-ray"/>
    <property type="resolution" value="3.20 A"/>
    <property type="chains" value="A=67-403"/>
</dbReference>
<dbReference type="PDB" id="7WC6">
    <property type="method" value="X-ray"/>
    <property type="resolution" value="2.60 A"/>
    <property type="chains" value="A=67-403"/>
</dbReference>
<dbReference type="PDB" id="7WC7">
    <property type="method" value="X-ray"/>
    <property type="resolution" value="2.60 A"/>
    <property type="chains" value="A=67-403"/>
</dbReference>
<dbReference type="PDB" id="7WC8">
    <property type="method" value="X-ray"/>
    <property type="resolution" value="2.45 A"/>
    <property type="chains" value="A=67-403"/>
</dbReference>
<dbReference type="PDB" id="7WC9">
    <property type="method" value="X-ray"/>
    <property type="resolution" value="2.50 A"/>
    <property type="chains" value="A=67-403"/>
</dbReference>
<dbReference type="PDB" id="8JT8">
    <property type="method" value="X-ray"/>
    <property type="resolution" value="2.70 A"/>
    <property type="chains" value="A=70-265, A=313-403"/>
</dbReference>
<dbReference type="PDB" id="8UWL">
    <property type="method" value="EM"/>
    <property type="resolution" value="2.80 A"/>
    <property type="chains" value="A=66-404"/>
</dbReference>
<dbReference type="PDB" id="8V6U">
    <property type="method" value="EM"/>
    <property type="resolution" value="3.00 A"/>
    <property type="chains" value="A=66-404"/>
</dbReference>
<dbReference type="PDB" id="8ZMG">
    <property type="method" value="X-ray"/>
    <property type="resolution" value="3.40 A"/>
    <property type="chains" value="A/B=70-265, A/B=313-403"/>
</dbReference>
<dbReference type="PDBsum" id="6A93"/>
<dbReference type="PDBsum" id="6A94"/>
<dbReference type="PDBsum" id="6WGT"/>
<dbReference type="PDBsum" id="6WH4"/>
<dbReference type="PDBsum" id="6WHA"/>
<dbReference type="PDBsum" id="7RAN"/>
<dbReference type="PDBsum" id="7VOD"/>
<dbReference type="PDBsum" id="7VOE"/>
<dbReference type="PDBsum" id="7WC4"/>
<dbReference type="PDBsum" id="7WC5"/>
<dbReference type="PDBsum" id="7WC6"/>
<dbReference type="PDBsum" id="7WC7"/>
<dbReference type="PDBsum" id="7WC8"/>
<dbReference type="PDBsum" id="7WC9"/>
<dbReference type="PDBsum" id="8JT8"/>
<dbReference type="PDBsum" id="8UWL"/>
<dbReference type="PDBsum" id="8V6U"/>
<dbReference type="PDBsum" id="8ZMG"/>
<dbReference type="EMDB" id="EMD-21669"/>
<dbReference type="EMDB" id="EMD-24378"/>
<dbReference type="EMDB" id="EMD-42676"/>
<dbReference type="EMDB" id="EMD-42999"/>
<dbReference type="SMR" id="P28223"/>
<dbReference type="BioGRID" id="109588">
    <property type="interactions" value="8"/>
</dbReference>
<dbReference type="CORUM" id="P28223"/>
<dbReference type="DIP" id="DIP-41844N"/>
<dbReference type="FunCoup" id="P28223">
    <property type="interactions" value="818"/>
</dbReference>
<dbReference type="IntAct" id="P28223">
    <property type="interactions" value="21"/>
</dbReference>
<dbReference type="MINT" id="P28223"/>
<dbReference type="STRING" id="9606.ENSP00000437737"/>
<dbReference type="BindingDB" id="P28223"/>
<dbReference type="ChEMBL" id="CHEMBL224"/>
<dbReference type="DrugBank" id="DB01467">
    <property type="generic name" value="2,5-Dimethoxy-4-ethylamphetamine"/>
</dbReference>
<dbReference type="DrugBank" id="DB13940">
    <property type="generic name" value="2,5-Dimethoxy-4-ethylthioamphetamine"/>
</dbReference>
<dbReference type="DrugBank" id="DB01465">
    <property type="generic name" value="2,5-Dimethoxyamphetamine"/>
</dbReference>
<dbReference type="DrugBank" id="DB01484">
    <property type="generic name" value="4-Bromo-2,5-dimethoxyamphetamine"/>
</dbReference>
<dbReference type="DrugBank" id="DB01537">
    <property type="generic name" value="4-Bromo-2,5-dimethoxyphenethylamine"/>
</dbReference>
<dbReference type="DrugBank" id="DB01528">
    <property type="generic name" value="4-Methyl-2,5-dimethoxyamphetamine"/>
</dbReference>
<dbReference type="DrugBank" id="DB14010">
    <property type="generic name" value="5-methoxy-N,N-dimethyltryptamine"/>
</dbReference>
<dbReference type="DrugBank" id="DB01614">
    <property type="generic name" value="Acepromazine"/>
</dbReference>
<dbReference type="DrugBank" id="DB06288">
    <property type="generic name" value="Amisulpride"/>
</dbReference>
<dbReference type="DrugBank" id="DB00321">
    <property type="generic name" value="Amitriptyline"/>
</dbReference>
<dbReference type="DrugBank" id="DB00543">
    <property type="generic name" value="Amoxapine"/>
</dbReference>
<dbReference type="DrugBank" id="DB08927">
    <property type="generic name" value="Amperozide"/>
</dbReference>
<dbReference type="DrugBank" id="DB04599">
    <property type="generic name" value="Aniracetam"/>
</dbReference>
<dbReference type="DrugBank" id="DB05227">
    <property type="generic name" value="APD791"/>
</dbReference>
<dbReference type="DrugBank" id="DB00714">
    <property type="generic name" value="Apomorphine"/>
</dbReference>
<dbReference type="DrugBank" id="DB01238">
    <property type="generic name" value="Aripiprazole"/>
</dbReference>
<dbReference type="DrugBank" id="DB14185">
    <property type="generic name" value="Aripiprazole lauroxil"/>
</dbReference>
<dbReference type="DrugBank" id="DB06216">
    <property type="generic name" value="Asenapine"/>
</dbReference>
<dbReference type="DrugBank" id="DB05687">
    <property type="generic name" value="BL-1020"/>
</dbReference>
<dbReference type="DrugBank" id="DB09223">
    <property type="generic name" value="Blonanserin"/>
</dbReference>
<dbReference type="DrugBank" id="DB09128">
    <property type="generic name" value="Brexpiprazole"/>
</dbReference>
<dbReference type="DrugBank" id="DB01200">
    <property type="generic name" value="Bromocriptine"/>
</dbReference>
<dbReference type="DrugBank" id="DB01445">
    <property type="generic name" value="Bufotenine"/>
</dbReference>
<dbReference type="DrugBank" id="DB09016">
    <property type="generic name" value="Butriptyline"/>
</dbReference>
<dbReference type="DrugBank" id="DB00248">
    <property type="generic name" value="Cabergoline"/>
</dbReference>
<dbReference type="DrugBank" id="DB09061">
    <property type="generic name" value="Cannabidiol"/>
</dbReference>
<dbReference type="DrugBank" id="DB06016">
    <property type="generic name" value="Cariprazine"/>
</dbReference>
<dbReference type="DrugBank" id="DB00477">
    <property type="generic name" value="Chlorpromazine"/>
</dbReference>
<dbReference type="DrugBank" id="DB01239">
    <property type="generic name" value="Chlorprothixene"/>
</dbReference>
<dbReference type="DrugBank" id="DB08810">
    <property type="generic name" value="Cinitapride"/>
</dbReference>
<dbReference type="DrugBank" id="DB00604">
    <property type="generic name" value="Cisapride"/>
</dbReference>
<dbReference type="DrugBank" id="DB01242">
    <property type="generic name" value="Clomipramine"/>
</dbReference>
<dbReference type="DrugBank" id="DB00363">
    <property type="generic name" value="Clozapine"/>
</dbReference>
<dbReference type="DrugBank" id="DB09000">
    <property type="generic name" value="Cyamemazine"/>
</dbReference>
<dbReference type="DrugBank" id="DB00924">
    <property type="generic name" value="Cyclobenzaprine"/>
</dbReference>
<dbReference type="DrugBank" id="DB00434">
    <property type="generic name" value="Cyproheptadine"/>
</dbReference>
<dbReference type="DrugBank" id="DB06512">
    <property type="generic name" value="Deramciclane"/>
</dbReference>
<dbReference type="DrugBank" id="DB01151">
    <property type="generic name" value="Desipramine"/>
</dbReference>
<dbReference type="DrugBank" id="DB11273">
    <property type="generic name" value="Dihydroergocornine"/>
</dbReference>
<dbReference type="DrugBank" id="DB13345">
    <property type="generic name" value="Dihydroergocristine"/>
</dbReference>
<dbReference type="DrugBank" id="DB00320">
    <property type="generic name" value="Dihydroergotamine"/>
</dbReference>
<dbReference type="DrugBank" id="DB01488">
    <property type="generic name" value="Dimethyltryptamine"/>
</dbReference>
<dbReference type="DrugBank" id="DB00843">
    <property type="generic name" value="Donepezil"/>
</dbReference>
<dbReference type="DrugBank" id="DB09167">
    <property type="generic name" value="Dosulepin"/>
</dbReference>
<dbReference type="DrugBank" id="DB06446">
    <property type="generic name" value="Dotarizine"/>
</dbReference>
<dbReference type="DrugBank" id="DB01142">
    <property type="generic name" value="Doxepin"/>
</dbReference>
<dbReference type="DrugBank" id="DB05492">
    <property type="generic name" value="Epicept NP-1"/>
</dbReference>
<dbReference type="DrugBank" id="DB00751">
    <property type="generic name" value="Epinastine"/>
</dbReference>
<dbReference type="DrugBank" id="DB12177">
    <property type="generic name" value="Eplivanserin"/>
</dbReference>
<dbReference type="DrugBank" id="DB01049">
    <property type="generic name" value="Ergoloid mesylate"/>
</dbReference>
<dbReference type="DrugBank" id="DB00696">
    <property type="generic name" value="Ergotamine"/>
</dbReference>
<dbReference type="DrugBank" id="DB01175">
    <property type="generic name" value="Escitalopram"/>
</dbReference>
<dbReference type="DrugBank" id="DB06678">
    <property type="generic name" value="Esmirtazapine"/>
</dbReference>
<dbReference type="DrugBank" id="DB09194">
    <property type="generic name" value="Etoperidone"/>
</dbReference>
<dbReference type="DrugBank" id="DB00574">
    <property type="generic name" value="Fenfluramine"/>
</dbReference>
<dbReference type="DrugBank" id="DB04908">
    <property type="generic name" value="Flibanserin"/>
</dbReference>
<dbReference type="DrugBank" id="DB13665">
    <property type="generic name" value="Fluanisone"/>
</dbReference>
<dbReference type="DrugBank" id="DB00875">
    <property type="generic name" value="Flupentixol"/>
</dbReference>
<dbReference type="DrugBank" id="DB00623">
    <property type="generic name" value="Fluphenazine"/>
</dbReference>
<dbReference type="DrugBank" id="DB04842">
    <property type="generic name" value="Fluspirilene"/>
</dbReference>
<dbReference type="DrugBank" id="DB12141">
    <property type="generic name" value="Gilteritinib"/>
</dbReference>
<dbReference type="DrugBank" id="DB00502">
    <property type="generic name" value="Haloperidol"/>
</dbReference>
<dbReference type="DrugBank" id="DB05079">
    <property type="generic name" value="HY10275"/>
</dbReference>
<dbReference type="DrugBank" id="DB04946">
    <property type="generic name" value="Iloperidone"/>
</dbReference>
<dbReference type="DrugBank" id="DB00458">
    <property type="generic name" value="Imipramine"/>
</dbReference>
<dbReference type="DrugBank" id="DB01221">
    <property type="generic name" value="Ketamine"/>
</dbReference>
<dbReference type="DrugBank" id="DB12465">
    <property type="generic name" value="Ketanserin"/>
</dbReference>
<dbReference type="DrugBank" id="DB00555">
    <property type="generic name" value="Lamotrigine"/>
</dbReference>
<dbReference type="DrugBank" id="DB16214">
    <property type="generic name" value="Landipirdine"/>
</dbReference>
<dbReference type="DrugBank" id="DB00589">
    <property type="generic name" value="Lisuride"/>
</dbReference>
<dbReference type="DrugBank" id="DB09195">
    <property type="generic name" value="Lorpiprazole"/>
</dbReference>
<dbReference type="DrugBank" id="DB00408">
    <property type="generic name" value="Loxapine"/>
</dbReference>
<dbReference type="DrugBank" id="DB09196">
    <property type="generic name" value="Lubazodone"/>
</dbReference>
<dbReference type="DrugBank" id="DB06077">
    <property type="generic name" value="Lumateperone"/>
</dbReference>
<dbReference type="DrugBank" id="DB08815">
    <property type="generic name" value="Lurasidone"/>
</dbReference>
<dbReference type="DrugBank" id="DB04829">
    <property type="generic name" value="Lysergic acid diethylamide"/>
</dbReference>
<dbReference type="DrugBank" id="DB12110">
    <property type="generic name" value="m-Chlorophenylpiperazine"/>
</dbReference>
<dbReference type="DrugBank" id="DB00934">
    <property type="generic name" value="Maprotiline"/>
</dbReference>
<dbReference type="DrugBank" id="DB14009">
    <property type="generic name" value="Medical Cannabis"/>
</dbReference>
<dbReference type="DrugBank" id="DB19083">
    <property type="generic name" value="Mescaline"/>
</dbReference>
<dbReference type="DrugBank" id="DB00933">
    <property type="generic name" value="Mesoridazine"/>
</dbReference>
<dbReference type="DrugBank" id="DB13520">
    <property type="generic name" value="Metergoline"/>
</dbReference>
<dbReference type="DrugBank" id="DB01403">
    <property type="generic name" value="Methotrimeprazine"/>
</dbReference>
<dbReference type="DrugBank" id="DB00247">
    <property type="generic name" value="Methysergide"/>
</dbReference>
<dbReference type="DrugBank" id="DB06148">
    <property type="generic name" value="Mianserin"/>
</dbReference>
<dbReference type="DrugBank" id="DB01454">
    <property type="generic name" value="Midomafetamine"/>
</dbReference>
<dbReference type="DrugBank" id="DB00805">
    <property type="generic name" value="Minaprine"/>
</dbReference>
<dbReference type="DrugBank" id="DB00370">
    <property type="generic name" value="Mirtazapine"/>
</dbReference>
<dbReference type="DrugBank" id="DB01442">
    <property type="generic name" value="MMDA"/>
</dbReference>
<dbReference type="DrugBank" id="DB01618">
    <property type="generic name" value="Molindone"/>
</dbReference>
<dbReference type="DrugBank" id="DB13948">
    <property type="generic name" value="N-(2-hydroxybenzyl)-2,5-dimethoxy-4-cyanophenylethylamine"/>
</dbReference>
<dbReference type="DrugBank" id="DB14011">
    <property type="generic name" value="Nabiximols"/>
</dbReference>
<dbReference type="DrugBank" id="DB08804">
    <property type="generic name" value="Nandrolone decanoate"/>
</dbReference>
<dbReference type="DrugBank" id="DB01149">
    <property type="generic name" value="Nefazodone"/>
</dbReference>
<dbReference type="DrugBank" id="DB12555">
    <property type="generic name" value="Nelotanserin"/>
</dbReference>
<dbReference type="DrugBank" id="DB00540">
    <property type="generic name" value="Nortriptyline"/>
</dbReference>
<dbReference type="DrugBank" id="DB06229">
    <property type="generic name" value="Ocaperidone"/>
</dbReference>
<dbReference type="DrugBank" id="DB00334">
    <property type="generic name" value="Olanzapine"/>
</dbReference>
<dbReference type="DrugBank" id="DB01267">
    <property type="generic name" value="Paliperidone"/>
</dbReference>
<dbReference type="DrugBank" id="DB00715">
    <property type="generic name" value="Paroxetine"/>
</dbReference>
<dbReference type="DrugBank" id="DB01186">
    <property type="generic name" value="Pergolide"/>
</dbReference>
<dbReference type="DrugBank" id="DB08922">
    <property type="generic name" value="Perospirone"/>
</dbReference>
<dbReference type="DrugBank" id="DB04325">
    <property type="generic name" value="Phenethylamine"/>
</dbReference>
<dbReference type="DrugBank" id="DB05316">
    <property type="generic name" value="Pimavanserin"/>
</dbReference>
<dbReference type="DrugBank" id="DB09286">
    <property type="generic name" value="Pipamperone"/>
</dbReference>
<dbReference type="DrugBank" id="DB01621">
    <property type="generic name" value="Pipotiazine"/>
</dbReference>
<dbReference type="DrugBank" id="DB06153">
    <property type="generic name" value="Pizotifen"/>
</dbReference>
<dbReference type="DrugBank" id="DB00420">
    <property type="generic name" value="Promazine"/>
</dbReference>
<dbReference type="DrugBank" id="DB00777">
    <property type="generic name" value="Propiomazine"/>
</dbReference>
<dbReference type="DrugBank" id="DB13094">
    <property type="generic name" value="Pruvanserin"/>
</dbReference>
<dbReference type="DrugBank" id="DB01224">
    <property type="generic name" value="Quetiapine"/>
</dbReference>
<dbReference type="DrugBank" id="DB00409">
    <property type="generic name" value="Remoxipride"/>
</dbReference>
<dbReference type="DrugBank" id="DB00734">
    <property type="generic name" value="Risperidone"/>
</dbReference>
<dbReference type="DrugBank" id="DB12693">
    <property type="generic name" value="Ritanserin"/>
</dbReference>
<dbReference type="DrugBank" id="DB13080">
    <property type="generic name" value="Roluperidone"/>
</dbReference>
<dbReference type="DrugBank" id="DB12163">
    <property type="generic name" value="Sarpogrelate"/>
</dbReference>
<dbReference type="DrugBank" id="DB08839">
    <property type="generic name" value="Serotonin"/>
</dbReference>
<dbReference type="DrugBank" id="DB06144">
    <property type="generic name" value="Sertindole"/>
</dbReference>
<dbReference type="DrugBank" id="DB09304">
    <property type="generic name" value="Setiptiline"/>
</dbReference>
<dbReference type="DrugBank" id="DB17056">
    <property type="generic name" value="Spiperone"/>
</dbReference>
<dbReference type="DrugBank" id="DB01079">
    <property type="generic name" value="Tegaserod"/>
</dbReference>
<dbReference type="DrugBank" id="DB00679">
    <property type="generic name" value="Thioridazine"/>
</dbReference>
<dbReference type="DrugBank" id="DB01623">
    <property type="generic name" value="Thiothixene"/>
</dbReference>
<dbReference type="DrugBank" id="DB13025">
    <property type="generic name" value="Tiapride"/>
</dbReference>
<dbReference type="DrugBank" id="DB00656">
    <property type="generic name" value="Trazodone"/>
</dbReference>
<dbReference type="DrugBank" id="DB18793">
    <property type="generic name" value="Trelanserin"/>
</dbReference>
<dbReference type="DrugBank" id="DB00726">
    <property type="generic name" value="Trimipramine"/>
</dbReference>
<dbReference type="DrugBank" id="DB08653">
    <property type="generic name" value="Tryptamine"/>
</dbReference>
<dbReference type="DrugBank" id="DB16351">
    <property type="generic name" value="Volinanserin"/>
</dbReference>
<dbReference type="DrugBank" id="DB06109">
    <property type="generic name" value="YKP-1358"/>
</dbReference>
<dbReference type="DrugBank" id="DB01392">
    <property type="generic name" value="Yohimbine"/>
</dbReference>
<dbReference type="DrugBank" id="DB12188">
    <property type="generic name" value="Zicronapine"/>
</dbReference>
<dbReference type="DrugBank" id="DB00246">
    <property type="generic name" value="Ziprasidone"/>
</dbReference>
<dbReference type="DrugBank" id="DB00315">
    <property type="generic name" value="Zolmitriptan"/>
</dbReference>
<dbReference type="DrugBank" id="DB09225">
    <property type="generic name" value="Zotepine"/>
</dbReference>
<dbReference type="DrugBank" id="DB01624">
    <property type="generic name" value="Zuclopenthixol"/>
</dbReference>
<dbReference type="DrugCentral" id="P28223"/>
<dbReference type="GuidetoPHARMACOLOGY" id="6"/>
<dbReference type="TCDB" id="9.A.14.3.17">
    <property type="family name" value="the g-protein-coupled receptor (gpcr) family"/>
</dbReference>
<dbReference type="GlyCosmos" id="P28223">
    <property type="glycosylation" value="5 sites, No reported glycans"/>
</dbReference>
<dbReference type="GlyGen" id="P28223">
    <property type="glycosylation" value="5 sites"/>
</dbReference>
<dbReference type="iPTMnet" id="P28223"/>
<dbReference type="PhosphoSitePlus" id="P28223"/>
<dbReference type="BioMuta" id="HTR2A"/>
<dbReference type="DMDM" id="543727"/>
<dbReference type="MassIVE" id="P28223"/>
<dbReference type="PaxDb" id="9606-ENSP00000437737"/>
<dbReference type="PeptideAtlas" id="P28223"/>
<dbReference type="ProteomicsDB" id="24094"/>
<dbReference type="ProteomicsDB" id="54453">
    <molecule id="P28223-1"/>
</dbReference>
<dbReference type="ABCD" id="P28223">
    <property type="antibodies" value="1 sequenced antibody"/>
</dbReference>
<dbReference type="Antibodypedia" id="2927">
    <property type="antibodies" value="356 antibodies from 34 providers"/>
</dbReference>
<dbReference type="DNASU" id="3356"/>
<dbReference type="Ensembl" id="ENST00000542664.4">
    <molecule id="P28223-1"/>
    <property type="protein sequence ID" value="ENSP00000437737.1"/>
    <property type="gene ID" value="ENSG00000102468.11"/>
</dbReference>
<dbReference type="GeneID" id="3356"/>
<dbReference type="KEGG" id="hsa:3356"/>
<dbReference type="MANE-Select" id="ENST00000542664.4">
    <property type="protein sequence ID" value="ENSP00000437737.1"/>
    <property type="RefSeq nucleotide sequence ID" value="NM_000621.5"/>
    <property type="RefSeq protein sequence ID" value="NP_000612.1"/>
</dbReference>
<dbReference type="UCSC" id="uc001vbr.5">
    <molecule id="P28223-1"/>
    <property type="organism name" value="human"/>
</dbReference>
<dbReference type="AGR" id="HGNC:5293"/>
<dbReference type="CTD" id="3356"/>
<dbReference type="DisGeNET" id="3356"/>
<dbReference type="GeneCards" id="HTR2A"/>
<dbReference type="HGNC" id="HGNC:5293">
    <property type="gene designation" value="HTR2A"/>
</dbReference>
<dbReference type="HPA" id="ENSG00000102468">
    <property type="expression patterns" value="Tissue enriched (brain)"/>
</dbReference>
<dbReference type="MalaCards" id="HTR2A"/>
<dbReference type="MIM" id="182135">
    <property type="type" value="gene"/>
</dbReference>
<dbReference type="neXtProt" id="NX_P28223"/>
<dbReference type="OpenTargets" id="ENSG00000102468"/>
<dbReference type="PharmGKB" id="PA193"/>
<dbReference type="VEuPathDB" id="HostDB:ENSG00000102468"/>
<dbReference type="eggNOG" id="KOG3656">
    <property type="taxonomic scope" value="Eukaryota"/>
</dbReference>
<dbReference type="GeneTree" id="ENSGT01050000244937"/>
<dbReference type="HOGENOM" id="CLU_009579_11_3_1"/>
<dbReference type="InParanoid" id="P28223"/>
<dbReference type="OMA" id="MVTIGIH"/>
<dbReference type="OrthoDB" id="420518at2759"/>
<dbReference type="PAN-GO" id="P28223">
    <property type="GO annotations" value="8 GO annotations based on evolutionary models"/>
</dbReference>
<dbReference type="PhylomeDB" id="P28223"/>
<dbReference type="TreeFam" id="TF316350"/>
<dbReference type="PathwayCommons" id="P28223"/>
<dbReference type="Reactome" id="R-HSA-390666">
    <property type="pathway name" value="Serotonin receptors"/>
</dbReference>
<dbReference type="Reactome" id="R-HSA-416476">
    <property type="pathway name" value="G alpha (q) signalling events"/>
</dbReference>
<dbReference type="SignaLink" id="P28223"/>
<dbReference type="SIGNOR" id="P28223"/>
<dbReference type="BioGRID-ORCS" id="3356">
    <property type="hits" value="7 hits in 1155 CRISPR screens"/>
</dbReference>
<dbReference type="GeneWiki" id="5-HT2A_receptor"/>
<dbReference type="GenomeRNAi" id="3356"/>
<dbReference type="Pharos" id="P28223">
    <property type="development level" value="Tclin"/>
</dbReference>
<dbReference type="PRO" id="PR:P28223"/>
<dbReference type="Proteomes" id="UP000005640">
    <property type="component" value="Chromosome 13"/>
</dbReference>
<dbReference type="RNAct" id="P28223">
    <property type="molecule type" value="protein"/>
</dbReference>
<dbReference type="Bgee" id="ENSG00000102468">
    <property type="expression patterns" value="Expressed in buccal mucosa cell and 131 other cell types or tissues"/>
</dbReference>
<dbReference type="ExpressionAtlas" id="P28223">
    <property type="expression patterns" value="baseline and differential"/>
</dbReference>
<dbReference type="GO" id="GO:0030424">
    <property type="term" value="C:axon"/>
    <property type="evidence" value="ECO:0007669"/>
    <property type="project" value="UniProtKB-SubCell"/>
</dbReference>
<dbReference type="GO" id="GO:0005901">
    <property type="term" value="C:caveola"/>
    <property type="evidence" value="ECO:0007669"/>
    <property type="project" value="UniProtKB-SubCell"/>
</dbReference>
<dbReference type="GO" id="GO:0070852">
    <property type="term" value="C:cell body fiber"/>
    <property type="evidence" value="ECO:0007669"/>
    <property type="project" value="Ensembl"/>
</dbReference>
<dbReference type="GO" id="GO:0031410">
    <property type="term" value="C:cytoplasmic vesicle"/>
    <property type="evidence" value="ECO:0007669"/>
    <property type="project" value="UniProtKB-KW"/>
</dbReference>
<dbReference type="GO" id="GO:0030425">
    <property type="term" value="C:dendrite"/>
    <property type="evidence" value="ECO:0000318"/>
    <property type="project" value="GO_Central"/>
</dbReference>
<dbReference type="GO" id="GO:0043198">
    <property type="term" value="C:dendritic shaft"/>
    <property type="evidence" value="ECO:0007669"/>
    <property type="project" value="Ensembl"/>
</dbReference>
<dbReference type="GO" id="GO:0098666">
    <property type="term" value="C:G protein-coupled serotonin receptor complex"/>
    <property type="evidence" value="ECO:0000314"/>
    <property type="project" value="UniProtKB"/>
</dbReference>
<dbReference type="GO" id="GO:0098978">
    <property type="term" value="C:glutamatergic synapse"/>
    <property type="evidence" value="ECO:0007669"/>
    <property type="project" value="Ensembl"/>
</dbReference>
<dbReference type="GO" id="GO:0005883">
    <property type="term" value="C:neurofilament"/>
    <property type="evidence" value="ECO:0007669"/>
    <property type="project" value="Ensembl"/>
</dbReference>
<dbReference type="GO" id="GO:0043025">
    <property type="term" value="C:neuronal cell body"/>
    <property type="evidence" value="ECO:0007669"/>
    <property type="project" value="Ensembl"/>
</dbReference>
<dbReference type="GO" id="GO:0005886">
    <property type="term" value="C:plasma membrane"/>
    <property type="evidence" value="ECO:0000314"/>
    <property type="project" value="UniProtKB"/>
</dbReference>
<dbReference type="GO" id="GO:0045211">
    <property type="term" value="C:postsynaptic membrane"/>
    <property type="evidence" value="ECO:0007669"/>
    <property type="project" value="Ensembl"/>
</dbReference>
<dbReference type="GO" id="GO:0042734">
    <property type="term" value="C:presynaptic membrane"/>
    <property type="evidence" value="ECO:0007669"/>
    <property type="project" value="Ensembl"/>
</dbReference>
<dbReference type="GO" id="GO:0071886">
    <property type="term" value="F:1-(4-iodo-2,5-dimethoxyphenyl)propan-2-amine binding"/>
    <property type="evidence" value="ECO:0000314"/>
    <property type="project" value="UniProtKB"/>
</dbReference>
<dbReference type="GO" id="GO:0004993">
    <property type="term" value="F:G protein-coupled serotonin receptor activity"/>
    <property type="evidence" value="ECO:0000314"/>
    <property type="project" value="UniProtKB"/>
</dbReference>
<dbReference type="GO" id="GO:0001587">
    <property type="term" value="F:Gq/11-coupled serotonin receptor activity"/>
    <property type="evidence" value="ECO:0000314"/>
    <property type="project" value="UniProtKB"/>
</dbReference>
<dbReference type="GO" id="GO:0042802">
    <property type="term" value="F:identical protein binding"/>
    <property type="evidence" value="ECO:0000353"/>
    <property type="project" value="IntAct"/>
</dbReference>
<dbReference type="GO" id="GO:0030594">
    <property type="term" value="F:neurotransmitter receptor activity"/>
    <property type="evidence" value="ECO:0000318"/>
    <property type="project" value="GO_Central"/>
</dbReference>
<dbReference type="GO" id="GO:0030296">
    <property type="term" value="F:protein tyrosine kinase activator activity"/>
    <property type="evidence" value="ECO:0007669"/>
    <property type="project" value="Ensembl"/>
</dbReference>
<dbReference type="GO" id="GO:0044877">
    <property type="term" value="F:protein-containing complex binding"/>
    <property type="evidence" value="ECO:0007669"/>
    <property type="project" value="Ensembl"/>
</dbReference>
<dbReference type="GO" id="GO:0051378">
    <property type="term" value="F:serotonin binding"/>
    <property type="evidence" value="ECO:0000314"/>
    <property type="project" value="UniProtKB"/>
</dbReference>
<dbReference type="GO" id="GO:0099589">
    <property type="term" value="F:serotonin receptor activity"/>
    <property type="evidence" value="ECO:0000314"/>
    <property type="project" value="UniProt"/>
</dbReference>
<dbReference type="GO" id="GO:0001618">
    <property type="term" value="F:virus receptor activity"/>
    <property type="evidence" value="ECO:0007669"/>
    <property type="project" value="UniProtKB-KW"/>
</dbReference>
<dbReference type="GO" id="GO:0014824">
    <property type="term" value="P:artery smooth muscle contraction"/>
    <property type="evidence" value="ECO:0007669"/>
    <property type="project" value="Ensembl"/>
</dbReference>
<dbReference type="GO" id="GO:0048148">
    <property type="term" value="P:behavioral response to cocaine"/>
    <property type="evidence" value="ECO:0007669"/>
    <property type="project" value="Ensembl"/>
</dbReference>
<dbReference type="GO" id="GO:0007268">
    <property type="term" value="P:chemical synaptic transmission"/>
    <property type="evidence" value="ECO:0000318"/>
    <property type="project" value="GO_Central"/>
</dbReference>
<dbReference type="GO" id="GO:0050966">
    <property type="term" value="P:detection of mechanical stimulus involved in sensory perception of pain"/>
    <property type="evidence" value="ECO:0007669"/>
    <property type="project" value="Ensembl"/>
</dbReference>
<dbReference type="GO" id="GO:0050965">
    <property type="term" value="P:detection of temperature stimulus involved in sensory perception of pain"/>
    <property type="evidence" value="ECO:0007669"/>
    <property type="project" value="Ensembl"/>
</dbReference>
<dbReference type="GO" id="GO:0007187">
    <property type="term" value="P:G protein-coupled receptor signaling pathway, coupled to cyclic nucleotide second messenger"/>
    <property type="evidence" value="ECO:0000318"/>
    <property type="project" value="GO_Central"/>
</dbReference>
<dbReference type="GO" id="GO:0098664">
    <property type="term" value="P:G protein-coupled serotonin receptor signaling pathway"/>
    <property type="evidence" value="ECO:0000314"/>
    <property type="project" value="UniProtKB"/>
</dbReference>
<dbReference type="GO" id="GO:0006096">
    <property type="term" value="P:glycolytic process"/>
    <property type="evidence" value="ECO:0007669"/>
    <property type="project" value="Ensembl"/>
</dbReference>
<dbReference type="GO" id="GO:0006874">
    <property type="term" value="P:intracellular calcium ion homeostasis"/>
    <property type="evidence" value="ECO:0000314"/>
    <property type="project" value="UniProtKB"/>
</dbReference>
<dbReference type="GO" id="GO:0007613">
    <property type="term" value="P:memory"/>
    <property type="evidence" value="ECO:0007669"/>
    <property type="project" value="Ensembl"/>
</dbReference>
<dbReference type="GO" id="GO:0043267">
    <property type="term" value="P:negative regulation of potassium ion transport"/>
    <property type="evidence" value="ECO:0007669"/>
    <property type="project" value="Ensembl"/>
</dbReference>
<dbReference type="GO" id="GO:0051967">
    <property type="term" value="P:negative regulation of synaptic transmission, glutamatergic"/>
    <property type="evidence" value="ECO:0007669"/>
    <property type="project" value="Ensembl"/>
</dbReference>
<dbReference type="GO" id="GO:0007208">
    <property type="term" value="P:phospholipase C-activating serotonin receptor signaling pathway"/>
    <property type="evidence" value="ECO:0000314"/>
    <property type="project" value="UniProtKB"/>
</dbReference>
<dbReference type="GO" id="GO:0008284">
    <property type="term" value="P:positive regulation of cell population proliferation"/>
    <property type="evidence" value="ECO:0007669"/>
    <property type="project" value="Ensembl"/>
</dbReference>
<dbReference type="GO" id="GO:0002720">
    <property type="term" value="P:positive regulation of cytokine production involved in immune response"/>
    <property type="evidence" value="ECO:0007669"/>
    <property type="project" value="Ensembl"/>
</dbReference>
<dbReference type="GO" id="GO:0007204">
    <property type="term" value="P:positive regulation of cytosolic calcium ion concentration"/>
    <property type="evidence" value="ECO:0007669"/>
    <property type="project" value="Ensembl"/>
</dbReference>
<dbReference type="GO" id="GO:2000573">
    <property type="term" value="P:positive regulation of DNA biosynthetic process"/>
    <property type="evidence" value="ECO:0007669"/>
    <property type="project" value="Ensembl"/>
</dbReference>
<dbReference type="GO" id="GO:0070374">
    <property type="term" value="P:positive regulation of ERK1 and ERK2 cascade"/>
    <property type="evidence" value="ECO:0000314"/>
    <property type="project" value="UniProtKB"/>
</dbReference>
<dbReference type="GO" id="GO:1900119">
    <property type="term" value="P:positive regulation of execution phase of apoptosis"/>
    <property type="evidence" value="ECO:0007669"/>
    <property type="project" value="Ensembl"/>
</dbReference>
<dbReference type="GO" id="GO:0045600">
    <property type="term" value="P:positive regulation of fat cell differentiation"/>
    <property type="evidence" value="ECO:0007669"/>
    <property type="project" value="Ensembl"/>
</dbReference>
<dbReference type="GO" id="GO:0045821">
    <property type="term" value="P:positive regulation of glycolytic process"/>
    <property type="evidence" value="ECO:0007669"/>
    <property type="project" value="Ensembl"/>
</dbReference>
<dbReference type="GO" id="GO:0031652">
    <property type="term" value="P:positive regulation of heat generation"/>
    <property type="evidence" value="ECO:0007669"/>
    <property type="project" value="Ensembl"/>
</dbReference>
<dbReference type="GO" id="GO:0050729">
    <property type="term" value="P:positive regulation of inflammatory response"/>
    <property type="evidence" value="ECO:0007669"/>
    <property type="project" value="Ensembl"/>
</dbReference>
<dbReference type="GO" id="GO:0043525">
    <property type="term" value="P:positive regulation of neuron apoptotic process"/>
    <property type="evidence" value="ECO:0007669"/>
    <property type="project" value="Ensembl"/>
</dbReference>
<dbReference type="GO" id="GO:0010513">
    <property type="term" value="P:positive regulation of phosphatidylinositol biosynthetic process"/>
    <property type="evidence" value="ECO:0000314"/>
    <property type="project" value="UniProtKB"/>
</dbReference>
<dbReference type="GO" id="GO:1901731">
    <property type="term" value="P:positive regulation of platelet aggregation"/>
    <property type="evidence" value="ECO:0007669"/>
    <property type="project" value="Ensembl"/>
</dbReference>
<dbReference type="GO" id="GO:0045907">
    <property type="term" value="P:positive regulation of vasoconstriction"/>
    <property type="evidence" value="ECO:0007669"/>
    <property type="project" value="Ensembl"/>
</dbReference>
<dbReference type="GO" id="GO:0099171">
    <property type="term" value="P:presynaptic modulation of chemical synaptic transmission"/>
    <property type="evidence" value="ECO:0007669"/>
    <property type="project" value="Ensembl"/>
</dbReference>
<dbReference type="GO" id="GO:0044380">
    <property type="term" value="P:protein localization to cytoskeleton"/>
    <property type="evidence" value="ECO:0007669"/>
    <property type="project" value="Ensembl"/>
</dbReference>
<dbReference type="GO" id="GO:0014059">
    <property type="term" value="P:regulation of dopamine secretion"/>
    <property type="evidence" value="ECO:0007669"/>
    <property type="project" value="Ensembl"/>
</dbReference>
<dbReference type="GO" id="GO:0051209">
    <property type="term" value="P:release of sequestered calcium ion into cytosol"/>
    <property type="evidence" value="ECO:0000314"/>
    <property type="project" value="UniProtKB"/>
</dbReference>
<dbReference type="GO" id="GO:0009410">
    <property type="term" value="P:response to xenobiotic stimulus"/>
    <property type="evidence" value="ECO:0000314"/>
    <property type="project" value="UniProtKB"/>
</dbReference>
<dbReference type="GO" id="GO:0046960">
    <property type="term" value="P:sensitization"/>
    <property type="evidence" value="ECO:0007669"/>
    <property type="project" value="Ensembl"/>
</dbReference>
<dbReference type="GO" id="GO:0007210">
    <property type="term" value="P:serotonin receptor signaling pathway"/>
    <property type="evidence" value="ECO:0000318"/>
    <property type="project" value="GO_Central"/>
</dbReference>
<dbReference type="GO" id="GO:0001659">
    <property type="term" value="P:temperature homeostasis"/>
    <property type="evidence" value="ECO:0007669"/>
    <property type="project" value="Ensembl"/>
</dbReference>
<dbReference type="GO" id="GO:0014832">
    <property type="term" value="P:urinary bladder smooth muscle contraction"/>
    <property type="evidence" value="ECO:0007669"/>
    <property type="project" value="Ensembl"/>
</dbReference>
<dbReference type="CDD" id="cd15304">
    <property type="entry name" value="7tmA_5-HT2A"/>
    <property type="match status" value="1"/>
</dbReference>
<dbReference type="Gene3D" id="1.20.1070.10">
    <property type="entry name" value="Rhodopsin 7-helix transmembrane proteins"/>
    <property type="match status" value="1"/>
</dbReference>
<dbReference type="InterPro" id="IPR000455">
    <property type="entry name" value="5HT2A_rcpt"/>
</dbReference>
<dbReference type="InterPro" id="IPR002231">
    <property type="entry name" value="5HT_rcpt"/>
</dbReference>
<dbReference type="InterPro" id="IPR000276">
    <property type="entry name" value="GPCR_Rhodpsn"/>
</dbReference>
<dbReference type="InterPro" id="IPR017452">
    <property type="entry name" value="GPCR_Rhodpsn_7TM"/>
</dbReference>
<dbReference type="PANTHER" id="PTHR24247">
    <property type="entry name" value="5-HYDROXYTRYPTAMINE RECEPTOR"/>
    <property type="match status" value="1"/>
</dbReference>
<dbReference type="PANTHER" id="PTHR24247:SF30">
    <property type="entry name" value="5-HYDROXYTRYPTAMINE RECEPTOR 2A"/>
    <property type="match status" value="1"/>
</dbReference>
<dbReference type="Pfam" id="PF00001">
    <property type="entry name" value="7tm_1"/>
    <property type="match status" value="1"/>
</dbReference>
<dbReference type="PRINTS" id="PR00516">
    <property type="entry name" value="5HT2ARECEPTR"/>
</dbReference>
<dbReference type="PRINTS" id="PR01101">
    <property type="entry name" value="5HTRECEPTOR"/>
</dbReference>
<dbReference type="PRINTS" id="PR00237">
    <property type="entry name" value="GPCRRHODOPSN"/>
</dbReference>
<dbReference type="SMART" id="SM01381">
    <property type="entry name" value="7TM_GPCR_Srsx"/>
    <property type="match status" value="1"/>
</dbReference>
<dbReference type="SUPFAM" id="SSF81321">
    <property type="entry name" value="Family A G protein-coupled receptor-like"/>
    <property type="match status" value="1"/>
</dbReference>
<dbReference type="PROSITE" id="PS00237">
    <property type="entry name" value="G_PROTEIN_RECEP_F1_1"/>
    <property type="match status" value="1"/>
</dbReference>
<dbReference type="PROSITE" id="PS50262">
    <property type="entry name" value="G_PROTEIN_RECEP_F1_2"/>
    <property type="match status" value="1"/>
</dbReference>
<sequence>MDILCEENTSLSSTTNSLMQLNDDTRLYSNDFNSGEANTSDAFNWTVDSENRTNLSCEGCLSPSCLSLLHLQEKNWSALLTAVVIILTIAGNILVIMAVSLEKKLQNATNYFLMSLAIADMLLGFLVMPVSMLTILYGYRWPLPSKLCAVWIYLDVLFSTASIMHLCAISLDRYVAIQNPIHHSRFNSRTKAFLKIIAVWTISVGISMPIPVFGLQDDSKVFKEGSCLLADDNFVLIGSFVSFFIPLTIMVITYFLTIKSLQKEATLCVSDLGTRAKLASFSFLPQSSLSSEKLFQRSIHREPGSYTGRRTMQSISNEQKACKVLGIVFFLFVVMWCPFFITNIMAVICKESCNEDVIGALLNVFVWIGYLSSAVNPLVYTLFNKTYRSAFSRYIQCQYKENKKPLQLILVNTIPALAYKSSQLQMGQKKNSKQDAKTTDNDCSMVALGKQHSEEASKDNSDGVNEKVSCV</sequence>
<proteinExistence type="evidence at protein level"/>